<feature type="chain" id="PRO_0000127228" description="Transcription factor 12">
    <location>
        <begin position="1"/>
        <end position="682"/>
    </location>
</feature>
<feature type="domain" description="bHLH" evidence="2">
    <location>
        <begin position="577"/>
        <end position="630"/>
    </location>
</feature>
<feature type="region of interest" description="Disordered" evidence="3">
    <location>
        <begin position="25"/>
        <end position="122"/>
    </location>
</feature>
<feature type="region of interest" description="Leucine-zipper">
    <location>
        <begin position="119"/>
        <end position="140"/>
    </location>
</feature>
<feature type="region of interest" description="Disordered" evidence="3">
    <location>
        <begin position="140"/>
        <end position="219"/>
    </location>
</feature>
<feature type="region of interest" description="Interaction with RUNX1T1" evidence="8">
    <location>
        <begin position="182"/>
        <end position="196"/>
    </location>
</feature>
<feature type="region of interest" description="Disordered" evidence="3">
    <location>
        <begin position="281"/>
        <end position="313"/>
    </location>
</feature>
<feature type="region of interest" description="Disordered" evidence="3">
    <location>
        <begin position="349"/>
        <end position="395"/>
    </location>
</feature>
<feature type="region of interest" description="Disordered" evidence="3">
    <location>
        <begin position="462"/>
        <end position="580"/>
    </location>
</feature>
<feature type="region of interest" description="Class A specific domain">
    <location>
        <begin position="632"/>
        <end position="655"/>
    </location>
</feature>
<feature type="region of interest" description="Disordered" evidence="3">
    <location>
        <begin position="651"/>
        <end position="682"/>
    </location>
</feature>
<feature type="short sequence motif" description="9aaTAD">
    <location>
        <begin position="19"/>
        <end position="27"/>
    </location>
</feature>
<feature type="compositionally biased region" description="Polar residues" evidence="3">
    <location>
        <begin position="30"/>
        <end position="48"/>
    </location>
</feature>
<feature type="compositionally biased region" description="Polar residues" evidence="3">
    <location>
        <begin position="56"/>
        <end position="76"/>
    </location>
</feature>
<feature type="compositionally biased region" description="Basic and acidic residues" evidence="3">
    <location>
        <begin position="81"/>
        <end position="93"/>
    </location>
</feature>
<feature type="compositionally biased region" description="Polar residues" evidence="3">
    <location>
        <begin position="101"/>
        <end position="121"/>
    </location>
</feature>
<feature type="compositionally biased region" description="Polar residues" evidence="3">
    <location>
        <begin position="144"/>
        <end position="163"/>
    </location>
</feature>
<feature type="compositionally biased region" description="Polar residues" evidence="3">
    <location>
        <begin position="282"/>
        <end position="306"/>
    </location>
</feature>
<feature type="compositionally biased region" description="Low complexity" evidence="3">
    <location>
        <begin position="352"/>
        <end position="363"/>
    </location>
</feature>
<feature type="compositionally biased region" description="Polar residues" evidence="3">
    <location>
        <begin position="364"/>
        <end position="376"/>
    </location>
</feature>
<feature type="compositionally biased region" description="Polar residues" evidence="3">
    <location>
        <begin position="383"/>
        <end position="395"/>
    </location>
</feature>
<feature type="compositionally biased region" description="Low complexity" evidence="3">
    <location>
        <begin position="481"/>
        <end position="492"/>
    </location>
</feature>
<feature type="compositionally biased region" description="Polar residues" evidence="3">
    <location>
        <begin position="506"/>
        <end position="517"/>
    </location>
</feature>
<feature type="compositionally biased region" description="Basic and acidic residues" evidence="3">
    <location>
        <begin position="518"/>
        <end position="530"/>
    </location>
</feature>
<feature type="compositionally biased region" description="Basic and acidic residues" evidence="3">
    <location>
        <begin position="536"/>
        <end position="551"/>
    </location>
</feature>
<feature type="compositionally biased region" description="Basic and acidic residues" evidence="3">
    <location>
        <begin position="568"/>
        <end position="580"/>
    </location>
</feature>
<feature type="compositionally biased region" description="Low complexity" evidence="3">
    <location>
        <begin position="661"/>
        <end position="672"/>
    </location>
</feature>
<feature type="compositionally biased region" description="Polar residues" evidence="3">
    <location>
        <begin position="673"/>
        <end position="682"/>
    </location>
</feature>
<feature type="modified residue" description="Phosphoserine" evidence="19">
    <location>
        <position position="47"/>
    </location>
</feature>
<feature type="modified residue" description="Phosphoserine" evidence="17 19">
    <location>
        <position position="67"/>
    </location>
</feature>
<feature type="modified residue" description="Phosphoserine" evidence="19">
    <location>
        <position position="79"/>
    </location>
</feature>
<feature type="modified residue" description="Phosphoserine" evidence="19">
    <location>
        <position position="98"/>
    </location>
</feature>
<feature type="modified residue" description="Phosphoserine" evidence="19">
    <location>
        <position position="116"/>
    </location>
</feature>
<feature type="modified residue" description="Phosphothreonine" evidence="16 19">
    <location>
        <position position="313"/>
    </location>
</feature>
<feature type="modified residue" description="Phosphoserine" evidence="17 19">
    <location>
        <position position="333"/>
    </location>
</feature>
<feature type="modified residue" description="Phosphoserine" evidence="19">
    <location>
        <position position="540"/>
    </location>
</feature>
<feature type="modified residue" description="Phosphothreonine" evidence="17">
    <location>
        <position position="557"/>
    </location>
</feature>
<feature type="modified residue" description="Phosphoserine" evidence="19">
    <location>
        <position position="558"/>
    </location>
</feature>
<feature type="modified residue" description="Phosphoserine" evidence="18 19">
    <location>
        <position position="559"/>
    </location>
</feature>
<feature type="cross-link" description="Glycyl lysine isopeptide (Lys-Gly) (interchain with G-Cter in SUMO2)" evidence="22">
    <location>
        <position position="110"/>
    </location>
</feature>
<feature type="cross-link" description="Glycyl lysine isopeptide (Lys-Gly) (interchain with G-Cter in SUMO2)" evidence="22">
    <location>
        <position position="181"/>
    </location>
</feature>
<feature type="cross-link" description="Glycyl lysine isopeptide (Lys-Gly) (interchain with G-Cter in SUMO2)" evidence="20 21 22">
    <location>
        <position position="519"/>
    </location>
</feature>
<feature type="cross-link" description="Glycyl lysine isopeptide (Lys-Gly) (interchain with G-Cter in SUMO2)" evidence="20">
    <location>
        <position position="550"/>
    </location>
</feature>
<feature type="cross-link" description="Glycyl lysine isopeptide (Lys-Gly) (interchain with G-Cter in SUMO2)" evidence="22">
    <location>
        <position position="609"/>
    </location>
</feature>
<feature type="cross-link" description="Glycyl lysine isopeptide (Lys-Gly) (interchain with G-Cter in SUMO2)" evidence="22">
    <location>
        <position position="653"/>
    </location>
</feature>
<feature type="splice variant" id="VSP_039109" description="In isoform 2." evidence="14">
    <location>
        <begin position="1"/>
        <end position="170"/>
    </location>
</feature>
<feature type="splice variant" id="VSP_057419" description="In isoform 4." evidence="12">
    <original>MNPQQQRMAAIGTDKELSDLLDFSAMFSPPVNSGKTRPT</original>
    <variation>MGKRYMHHPQIQMISTVNLLVIHLLSHQPVCSLALSLCK</variation>
    <location>
        <begin position="1"/>
        <end position="39"/>
    </location>
</feature>
<feature type="splice variant" id="VSP_057420" description="In isoform 4." evidence="12">
    <location>
        <begin position="40"/>
        <end position="275"/>
    </location>
</feature>
<feature type="splice variant" id="VSP_039110" description="In isoform 2." evidence="14">
    <original>DSAALDPLQAKKVRKVPPGLPSS</original>
    <variation>MYCAYPVPGMGSNSLMYYYNGKT</variation>
    <location>
        <begin position="171"/>
        <end position="193"/>
    </location>
</feature>
<feature type="splice variant" id="VSP_040024" description="In isoform 3." evidence="13">
    <original>L</original>
    <variation>LKNRVEQQLHEHLQDAMSFLKDVCE</variation>
    <location>
        <position position="396"/>
    </location>
</feature>
<feature type="sequence variant" id="VAR_049543" description="In dbSNP:rs12442879.">
    <original>G</original>
    <variation>S</variation>
    <location>
        <position position="300"/>
    </location>
</feature>
<feature type="sequence variant" id="VAR_072271" description="In CRS3; dbSNP:rs36060670." evidence="9">
    <original>L</original>
    <variation>R</variation>
    <location>
        <position position="483"/>
    </location>
</feature>
<feature type="sequence variant" id="VAR_070096" description="In CRS3." evidence="7">
    <original>L</original>
    <variation>P</variation>
    <location>
        <position position="600"/>
    </location>
</feature>
<feature type="sequence variant" id="VAR_070097" description="In CRS3; dbSNP:rs886037641." evidence="7">
    <original>Q</original>
    <variation>E</variation>
    <location>
        <position position="614"/>
    </location>
</feature>
<feature type="mutagenesis site" description="Decreases interaction with RUNX1T1." evidence="8">
    <original>P</original>
    <variation>A</variation>
    <location>
        <position position="187"/>
    </location>
</feature>
<feature type="mutagenesis site" description="Decreases interaction with RUNX1T1." evidence="8">
    <original>P</original>
    <variation>A</variation>
    <location>
        <position position="191"/>
    </location>
</feature>
<feature type="mutagenesis site" description="Decreases interaction with RUNX1T1." evidence="8">
    <original>S</original>
    <variation>A</variation>
    <location>
        <position position="192"/>
    </location>
</feature>
<feature type="sequence conflict" description="In Ref. 4; CAD89914." evidence="15" ref="4">
    <original>K</original>
    <variation>E</variation>
    <location>
        <position position="523"/>
    </location>
</feature>
<feature type="helix" evidence="23">
    <location>
        <begin position="15"/>
        <end position="18"/>
    </location>
</feature>
<feature type="turn" evidence="23">
    <location>
        <begin position="24"/>
        <end position="26"/>
    </location>
</feature>
<sequence length="682" mass="72965">MNPQQQRMAAIGTDKELSDLLDFSAMFSPPVNSGKTRPTTLGSSQFSGSGIDERGGTTSWGTSGQPSPSYDSSRGFTDSPHYSDHLNDSRLGAHEGLSPTPFMNSNLMGKTSERGSFSLYSRDTGLPGCQSSLLRQDLGLGSPAQLSSSGKPGTAYYSFSATSSRRRPLHDSAALDPLQAKKVRKVPPGLPSSVYAPSPNSDDFNRESPSYPSPKPPTSMFASTFFMQDGTHNSSDLWSSSNGMSQPGFGGILGTSTSHMSQSSSYGNLHSHDRLSYPPHSVSPTDINTSLPPMSSFHRGSTSSSPYVAASHTPPINGSDSILGTRGNAAGSSQTGDALGKALASIYSPDHTSSSFPSNPSTPVGSPSPLTGTSQWPRPGGQAPSSPSYENSLHSLQSRMEDRLDRLDDAIHVLRNHAVGPSTSLPAGHSDIHSLLGPSHNAPIGSLNSNYGGSSLVASSRSASMVGTHREDSVSLNGNHSVLSSTVTTSSTDLNHKTQENYRGGLQSQSGTVVTTEIKTENKEKDENLHEPPSSDDMKSDDESSQKDIKVSSRGRTSSTNEDEDLNPEQKIEREKERRMANNARERLRVRDINEAFKELGRMCQLHLKSEKPQTKLLILHQAVAVILSLEQQVRERNLNPKAACLKRREEEKVSAVSAEPPTTLPGTHPGLSETTNPMGHM</sequence>
<dbReference type="EMBL" id="M83233">
    <property type="protein sequence ID" value="AAB62389.1"/>
    <property type="molecule type" value="mRNA"/>
</dbReference>
<dbReference type="EMBL" id="M80627">
    <property type="protein sequence ID" value="AAA58632.1"/>
    <property type="molecule type" value="mRNA"/>
</dbReference>
<dbReference type="EMBL" id="AL831981">
    <property type="protein sequence ID" value="CAD89914.1"/>
    <property type="molecule type" value="mRNA"/>
</dbReference>
<dbReference type="EMBL" id="AK304007">
    <property type="protein sequence ID" value="BAG64923.1"/>
    <property type="molecule type" value="mRNA"/>
</dbReference>
<dbReference type="EMBL" id="BX537967">
    <property type="protein sequence ID" value="CAD97931.1"/>
    <property type="molecule type" value="mRNA"/>
</dbReference>
<dbReference type="EMBL" id="AC010999">
    <property type="status" value="NOT_ANNOTATED_CDS"/>
    <property type="molecule type" value="Genomic_DNA"/>
</dbReference>
<dbReference type="EMBL" id="AC016525">
    <property type="status" value="NOT_ANNOTATED_CDS"/>
    <property type="molecule type" value="Genomic_DNA"/>
</dbReference>
<dbReference type="EMBL" id="AC090511">
    <property type="status" value="NOT_ANNOTATED_CDS"/>
    <property type="molecule type" value="Genomic_DNA"/>
</dbReference>
<dbReference type="EMBL" id="AC090532">
    <property type="status" value="NOT_ANNOTATED_CDS"/>
    <property type="molecule type" value="Genomic_DNA"/>
</dbReference>
<dbReference type="EMBL" id="KF456057">
    <property type="status" value="NOT_ANNOTATED_CDS"/>
    <property type="molecule type" value="Genomic_DNA"/>
</dbReference>
<dbReference type="EMBL" id="CH471082">
    <property type="protein sequence ID" value="EAW77512.1"/>
    <property type="molecule type" value="Genomic_DNA"/>
</dbReference>
<dbReference type="EMBL" id="BC050556">
    <property type="protein sequence ID" value="AAH50556.1"/>
    <property type="molecule type" value="mRNA"/>
</dbReference>
<dbReference type="EMBL" id="M65209">
    <property type="protein sequence ID" value="AAC37571.1"/>
    <property type="molecule type" value="mRNA"/>
</dbReference>
<dbReference type="EMBL" id="BK001049">
    <property type="protein sequence ID" value="DAA01129.1"/>
    <property type="molecule type" value="mRNA"/>
</dbReference>
<dbReference type="CCDS" id="CCDS10159.1">
    <molecule id="Q99081-1"/>
</dbReference>
<dbReference type="CCDS" id="CCDS10160.1">
    <molecule id="Q99081-3"/>
</dbReference>
<dbReference type="CCDS" id="CCDS42042.1">
    <molecule id="Q99081-2"/>
</dbReference>
<dbReference type="CCDS" id="CCDS76761.1">
    <molecule id="Q99081-4"/>
</dbReference>
<dbReference type="PIR" id="A42121">
    <property type="entry name" value="A42121"/>
</dbReference>
<dbReference type="RefSeq" id="NP_001293149.1">
    <molecule id="Q99081-4"/>
    <property type="nucleotide sequence ID" value="NM_001306220.3"/>
</dbReference>
<dbReference type="RefSeq" id="NP_001309080.1">
    <molecule id="Q99081-3"/>
    <property type="nucleotide sequence ID" value="NM_001322151.2"/>
</dbReference>
<dbReference type="RefSeq" id="NP_001309086.1">
    <molecule id="Q99081-1"/>
    <property type="nucleotide sequence ID" value="NM_001322157.3"/>
</dbReference>
<dbReference type="RefSeq" id="NP_001309088.1">
    <molecule id="Q99081-3"/>
    <property type="nucleotide sequence ID" value="NM_001322159.3"/>
</dbReference>
<dbReference type="RefSeq" id="NP_001309091.1">
    <molecule id="Q99081-3"/>
    <property type="nucleotide sequence ID" value="NM_001322162.2"/>
</dbReference>
<dbReference type="RefSeq" id="NP_001309094.1">
    <molecule id="Q99081-1"/>
    <property type="nucleotide sequence ID" value="NM_001322165.2"/>
</dbReference>
<dbReference type="RefSeq" id="NP_003196.1">
    <molecule id="Q99081-1"/>
    <property type="nucleotide sequence ID" value="NM_003205.4"/>
</dbReference>
<dbReference type="RefSeq" id="NP_996919.1">
    <molecule id="Q99081-3"/>
    <property type="nucleotide sequence ID" value="NM_207036.2"/>
</dbReference>
<dbReference type="RefSeq" id="NP_996920.1">
    <molecule id="Q99081-3"/>
    <property type="nucleotide sequence ID" value="NM_207037.2"/>
</dbReference>
<dbReference type="RefSeq" id="NP_996921.1">
    <molecule id="Q99081-1"/>
    <property type="nucleotide sequence ID" value="NM_207038.2"/>
</dbReference>
<dbReference type="RefSeq" id="NP_996923.1">
    <molecule id="Q99081-2"/>
    <property type="nucleotide sequence ID" value="NM_207040.2"/>
</dbReference>
<dbReference type="RefSeq" id="XP_047288931.1">
    <molecule id="Q99081-2"/>
    <property type="nucleotide sequence ID" value="XM_047432975.1"/>
</dbReference>
<dbReference type="PDB" id="2KNH">
    <property type="method" value="NMR"/>
    <property type="chains" value="B=11-28"/>
</dbReference>
<dbReference type="PDB" id="4JOL">
    <property type="method" value="X-ray"/>
    <property type="resolution" value="2.91 A"/>
    <property type="chains" value="E/F/G/H=177-200"/>
</dbReference>
<dbReference type="PDBsum" id="2KNH"/>
<dbReference type="PDBsum" id="4JOL"/>
<dbReference type="BMRB" id="Q99081"/>
<dbReference type="SMR" id="Q99081"/>
<dbReference type="BioGRID" id="112798">
    <property type="interactions" value="138"/>
</dbReference>
<dbReference type="CORUM" id="Q99081"/>
<dbReference type="DIP" id="DIP-29403N"/>
<dbReference type="FunCoup" id="Q99081">
    <property type="interactions" value="6282"/>
</dbReference>
<dbReference type="IntAct" id="Q99081">
    <property type="interactions" value="111"/>
</dbReference>
<dbReference type="MINT" id="Q99081"/>
<dbReference type="STRING" id="9606.ENSP00000388940"/>
<dbReference type="GlyCosmos" id="Q99081">
    <property type="glycosylation" value="1 site, 1 glycan"/>
</dbReference>
<dbReference type="GlyGen" id="Q99081">
    <property type="glycosylation" value="8 sites, 1 O-linked glycan (8 sites)"/>
</dbReference>
<dbReference type="iPTMnet" id="Q99081"/>
<dbReference type="PhosphoSitePlus" id="Q99081"/>
<dbReference type="BioMuta" id="TCF12"/>
<dbReference type="DMDM" id="1708332"/>
<dbReference type="jPOST" id="Q99081"/>
<dbReference type="MassIVE" id="Q99081"/>
<dbReference type="PaxDb" id="9606-ENSP00000388940"/>
<dbReference type="PeptideAtlas" id="Q99081"/>
<dbReference type="ProteomicsDB" id="5790"/>
<dbReference type="ProteomicsDB" id="78231">
    <molecule id="Q99081-1"/>
</dbReference>
<dbReference type="ProteomicsDB" id="78232">
    <molecule id="Q99081-2"/>
</dbReference>
<dbReference type="ProteomicsDB" id="78233">
    <molecule id="Q99081-3"/>
</dbReference>
<dbReference type="Pumba" id="Q99081"/>
<dbReference type="Antibodypedia" id="913">
    <property type="antibodies" value="419 antibodies from 35 providers"/>
</dbReference>
<dbReference type="DNASU" id="6938"/>
<dbReference type="Ensembl" id="ENST00000267811.9">
    <molecule id="Q99081-1"/>
    <property type="protein sequence ID" value="ENSP00000267811.5"/>
    <property type="gene ID" value="ENSG00000140262.18"/>
</dbReference>
<dbReference type="Ensembl" id="ENST00000333725.10">
    <molecule id="Q99081-3"/>
    <property type="protein sequence ID" value="ENSP00000331057.6"/>
    <property type="gene ID" value="ENSG00000140262.18"/>
</dbReference>
<dbReference type="Ensembl" id="ENST00000343827.7">
    <molecule id="Q99081-2"/>
    <property type="protein sequence ID" value="ENSP00000342459.3"/>
    <property type="gene ID" value="ENSG00000140262.18"/>
</dbReference>
<dbReference type="Ensembl" id="ENST00000438423.6">
    <molecule id="Q99081-3"/>
    <property type="protein sequence ID" value="ENSP00000388940.2"/>
    <property type="gene ID" value="ENSG00000140262.18"/>
</dbReference>
<dbReference type="Ensembl" id="ENST00000537840.5">
    <molecule id="Q99081-4"/>
    <property type="protein sequence ID" value="ENSP00000444696.1"/>
    <property type="gene ID" value="ENSG00000140262.18"/>
</dbReference>
<dbReference type="Ensembl" id="ENST00000557843.5">
    <molecule id="Q99081-1"/>
    <property type="protein sequence ID" value="ENSP00000453737.1"/>
    <property type="gene ID" value="ENSG00000140262.18"/>
</dbReference>
<dbReference type="GeneID" id="6938"/>
<dbReference type="KEGG" id="hsa:6938"/>
<dbReference type="MANE-Select" id="ENST00000333725.10">
    <molecule id="Q99081-3"/>
    <property type="protein sequence ID" value="ENSP00000331057.6"/>
    <property type="RefSeq nucleotide sequence ID" value="NM_207037.2"/>
    <property type="RefSeq protein sequence ID" value="NP_996920.1"/>
</dbReference>
<dbReference type="UCSC" id="uc002aea.4">
    <molecule id="Q99081-1"/>
    <property type="organism name" value="human"/>
</dbReference>
<dbReference type="UCSC" id="uc010ugo.3">
    <property type="organism name" value="human"/>
</dbReference>
<dbReference type="AGR" id="HGNC:11623"/>
<dbReference type="CTD" id="6938"/>
<dbReference type="DisGeNET" id="6938"/>
<dbReference type="GeneCards" id="TCF12"/>
<dbReference type="HGNC" id="HGNC:11623">
    <property type="gene designation" value="TCF12"/>
</dbReference>
<dbReference type="HPA" id="ENSG00000140262">
    <property type="expression patterns" value="Low tissue specificity"/>
</dbReference>
<dbReference type="MalaCards" id="TCF12"/>
<dbReference type="MIM" id="600480">
    <property type="type" value="gene"/>
</dbReference>
<dbReference type="MIM" id="615314">
    <property type="type" value="phenotype"/>
</dbReference>
<dbReference type="MIM" id="619718">
    <property type="type" value="phenotype"/>
</dbReference>
<dbReference type="neXtProt" id="NX_Q99081"/>
<dbReference type="OpenTargets" id="ENSG00000140262"/>
<dbReference type="Orphanet" id="209916">
    <property type="disease" value="Extraskeletal myxoid chondrosarcoma"/>
</dbReference>
<dbReference type="Orphanet" id="35099">
    <property type="disease" value="Non-syndromic bicoronal craniosynostosis"/>
</dbReference>
<dbReference type="PharmGKB" id="PA36381"/>
<dbReference type="VEuPathDB" id="HostDB:ENSG00000140262"/>
<dbReference type="eggNOG" id="KOG3910">
    <property type="taxonomic scope" value="Eukaryota"/>
</dbReference>
<dbReference type="GeneTree" id="ENSGT00940000155047"/>
<dbReference type="HOGENOM" id="CLU_021099_2_0_1"/>
<dbReference type="InParanoid" id="Q99081"/>
<dbReference type="OMA" id="SSRGRTX"/>
<dbReference type="OrthoDB" id="10034090at2759"/>
<dbReference type="PAN-GO" id="Q99081">
    <property type="GO annotations" value="4 GO annotations based on evolutionary models"/>
</dbReference>
<dbReference type="PhylomeDB" id="Q99081"/>
<dbReference type="TreeFam" id="TF321672"/>
<dbReference type="PathwayCommons" id="Q99081"/>
<dbReference type="Reactome" id="R-HSA-525793">
    <property type="pathway name" value="Myogenesis"/>
</dbReference>
<dbReference type="Reactome" id="R-HSA-8939236">
    <property type="pathway name" value="RUNX1 regulates transcription of genes involved in differentiation of HSCs"/>
</dbReference>
<dbReference type="Reactome" id="R-HSA-9031628">
    <property type="pathway name" value="NGF-stimulated transcription"/>
</dbReference>
<dbReference type="Reactome" id="R-HSA-9839394">
    <property type="pathway name" value="TGFBR3 expression"/>
</dbReference>
<dbReference type="SignaLink" id="Q99081"/>
<dbReference type="SIGNOR" id="Q99081"/>
<dbReference type="BioGRID-ORCS" id="6938">
    <property type="hits" value="24 hits in 1187 CRISPR screens"/>
</dbReference>
<dbReference type="ChiTaRS" id="TCF12">
    <property type="organism name" value="human"/>
</dbReference>
<dbReference type="EvolutionaryTrace" id="Q99081"/>
<dbReference type="GeneWiki" id="TCF12"/>
<dbReference type="GenomeRNAi" id="6938"/>
<dbReference type="Pharos" id="Q99081">
    <property type="development level" value="Tbio"/>
</dbReference>
<dbReference type="PRO" id="PR:Q99081"/>
<dbReference type="Proteomes" id="UP000005640">
    <property type="component" value="Chromosome 15"/>
</dbReference>
<dbReference type="RNAct" id="Q99081">
    <property type="molecule type" value="protein"/>
</dbReference>
<dbReference type="Bgee" id="ENSG00000140262">
    <property type="expression patterns" value="Expressed in periodontal ligament and 204 other cell types or tissues"/>
</dbReference>
<dbReference type="ExpressionAtlas" id="Q99081">
    <property type="expression patterns" value="baseline and differential"/>
</dbReference>
<dbReference type="GO" id="GO:0000785">
    <property type="term" value="C:chromatin"/>
    <property type="evidence" value="ECO:0000314"/>
    <property type="project" value="BHF-UCL"/>
</dbReference>
<dbReference type="GO" id="GO:0005737">
    <property type="term" value="C:cytoplasm"/>
    <property type="evidence" value="ECO:0000314"/>
    <property type="project" value="BHF-UCL"/>
</dbReference>
<dbReference type="GO" id="GO:0043231">
    <property type="term" value="C:intracellular membrane-bounded organelle"/>
    <property type="evidence" value="ECO:0000314"/>
    <property type="project" value="HPA"/>
</dbReference>
<dbReference type="GO" id="GO:0016607">
    <property type="term" value="C:nuclear speck"/>
    <property type="evidence" value="ECO:0000314"/>
    <property type="project" value="HPA"/>
</dbReference>
<dbReference type="GO" id="GO:0005654">
    <property type="term" value="C:nucleoplasm"/>
    <property type="evidence" value="ECO:0000314"/>
    <property type="project" value="HPA"/>
</dbReference>
<dbReference type="GO" id="GO:0005634">
    <property type="term" value="C:nucleus"/>
    <property type="evidence" value="ECO:0000314"/>
    <property type="project" value="LIFEdb"/>
</dbReference>
<dbReference type="GO" id="GO:0090575">
    <property type="term" value="C:RNA polymerase II transcription regulator complex"/>
    <property type="evidence" value="ECO:0000314"/>
    <property type="project" value="BHF-UCL"/>
</dbReference>
<dbReference type="GO" id="GO:0005667">
    <property type="term" value="C:transcription regulator complex"/>
    <property type="evidence" value="ECO:0000318"/>
    <property type="project" value="GO_Central"/>
</dbReference>
<dbReference type="GO" id="GO:0043425">
    <property type="term" value="F:bHLH transcription factor binding"/>
    <property type="evidence" value="ECO:0000353"/>
    <property type="project" value="BHF-UCL"/>
</dbReference>
<dbReference type="GO" id="GO:0035497">
    <property type="term" value="F:cAMP response element binding"/>
    <property type="evidence" value="ECO:0007669"/>
    <property type="project" value="Ensembl"/>
</dbReference>
<dbReference type="GO" id="GO:0000987">
    <property type="term" value="F:cis-regulatory region sequence-specific DNA binding"/>
    <property type="evidence" value="ECO:0000305"/>
    <property type="project" value="BHF-UCL"/>
</dbReference>
<dbReference type="GO" id="GO:0001228">
    <property type="term" value="F:DNA-binding transcription activator activity, RNA polymerase II-specific"/>
    <property type="evidence" value="ECO:0000314"/>
    <property type="project" value="NTNU_SB"/>
</dbReference>
<dbReference type="GO" id="GO:0003700">
    <property type="term" value="F:DNA-binding transcription factor activity"/>
    <property type="evidence" value="ECO:0000314"/>
    <property type="project" value="BHF-UCL"/>
</dbReference>
<dbReference type="GO" id="GO:0000981">
    <property type="term" value="F:DNA-binding transcription factor activity, RNA polymerase II-specific"/>
    <property type="evidence" value="ECO:0000247"/>
    <property type="project" value="NTNU_SB"/>
</dbReference>
<dbReference type="GO" id="GO:0140297">
    <property type="term" value="F:DNA-binding transcription factor binding"/>
    <property type="evidence" value="ECO:0000353"/>
    <property type="project" value="BHF-UCL"/>
</dbReference>
<dbReference type="GO" id="GO:0070888">
    <property type="term" value="F:E-box binding"/>
    <property type="evidence" value="ECO:0007669"/>
    <property type="project" value="Ensembl"/>
</dbReference>
<dbReference type="GO" id="GO:0071837">
    <property type="term" value="F:HMG box domain binding"/>
    <property type="evidence" value="ECO:0007669"/>
    <property type="project" value="Ensembl"/>
</dbReference>
<dbReference type="GO" id="GO:0046982">
    <property type="term" value="F:protein heterodimerization activity"/>
    <property type="evidence" value="ECO:0007669"/>
    <property type="project" value="Ensembl"/>
</dbReference>
<dbReference type="GO" id="GO:0000978">
    <property type="term" value="F:RNA polymerase II cis-regulatory region sequence-specific DNA binding"/>
    <property type="evidence" value="ECO:0000314"/>
    <property type="project" value="NTNU_SB"/>
</dbReference>
<dbReference type="GO" id="GO:1990837">
    <property type="term" value="F:sequence-specific double-stranded DNA binding"/>
    <property type="evidence" value="ECO:0000314"/>
    <property type="project" value="ARUK-UCL"/>
</dbReference>
<dbReference type="GO" id="GO:0046332">
    <property type="term" value="F:SMAD binding"/>
    <property type="evidence" value="ECO:0000353"/>
    <property type="project" value="BHF-UCL"/>
</dbReference>
<dbReference type="GO" id="GO:0030154">
    <property type="term" value="P:cell differentiation"/>
    <property type="evidence" value="ECO:0007669"/>
    <property type="project" value="UniProtKB-KW"/>
</dbReference>
<dbReference type="GO" id="GO:0010467">
    <property type="term" value="P:gene expression"/>
    <property type="evidence" value="ECO:0007669"/>
    <property type="project" value="Ensembl"/>
</dbReference>
<dbReference type="GO" id="GO:0006955">
    <property type="term" value="P:immune response"/>
    <property type="evidence" value="ECO:0000304"/>
    <property type="project" value="ProtInc"/>
</dbReference>
<dbReference type="GO" id="GO:0007517">
    <property type="term" value="P:muscle organ development"/>
    <property type="evidence" value="ECO:0000304"/>
    <property type="project" value="ProtInc"/>
</dbReference>
<dbReference type="GO" id="GO:0007399">
    <property type="term" value="P:nervous system development"/>
    <property type="evidence" value="ECO:0007669"/>
    <property type="project" value="UniProtKB-KW"/>
</dbReference>
<dbReference type="GO" id="GO:0010628">
    <property type="term" value="P:positive regulation of gene expression"/>
    <property type="evidence" value="ECO:0007669"/>
    <property type="project" value="Ensembl"/>
</dbReference>
<dbReference type="GO" id="GO:0045666">
    <property type="term" value="P:positive regulation of neuron differentiation"/>
    <property type="evidence" value="ECO:0007669"/>
    <property type="project" value="Ensembl"/>
</dbReference>
<dbReference type="GO" id="GO:0045944">
    <property type="term" value="P:positive regulation of transcription by RNA polymerase II"/>
    <property type="evidence" value="ECO:0000314"/>
    <property type="project" value="NTNU_SB"/>
</dbReference>
<dbReference type="GO" id="GO:0006357">
    <property type="term" value="P:regulation of transcription by RNA polymerase II"/>
    <property type="evidence" value="ECO:0000318"/>
    <property type="project" value="GO_Central"/>
</dbReference>
<dbReference type="GO" id="GO:0097210">
    <property type="term" value="P:response to gonadotropin-releasing hormone"/>
    <property type="evidence" value="ECO:0000315"/>
    <property type="project" value="UniProtKB"/>
</dbReference>
<dbReference type="CDD" id="cd18945">
    <property type="entry name" value="bHLH_E-protein_TCF4_E2-2"/>
    <property type="match status" value="1"/>
</dbReference>
<dbReference type="FunFam" id="4.10.280.10:FF:000001">
    <property type="entry name" value="Putative transcription factor 12"/>
    <property type="match status" value="1"/>
</dbReference>
<dbReference type="Gene3D" id="4.10.280.10">
    <property type="entry name" value="Helix-loop-helix DNA-binding domain"/>
    <property type="match status" value="1"/>
</dbReference>
<dbReference type="IDEAL" id="IID00222"/>
<dbReference type="InterPro" id="IPR011598">
    <property type="entry name" value="bHLH_dom"/>
</dbReference>
<dbReference type="InterPro" id="IPR036638">
    <property type="entry name" value="HLH_DNA-bd_sf"/>
</dbReference>
<dbReference type="InterPro" id="IPR051098">
    <property type="entry name" value="NeuroDiff_E-box_TFs"/>
</dbReference>
<dbReference type="PANTHER" id="PTHR11793">
    <property type="entry name" value="BASIC HELIX-LOOP-HELIX TRANSCRIPTION FACTOR"/>
    <property type="match status" value="1"/>
</dbReference>
<dbReference type="PANTHER" id="PTHR11793:SF11">
    <property type="entry name" value="TRANSCRIPTION FACTOR 12"/>
    <property type="match status" value="1"/>
</dbReference>
<dbReference type="Pfam" id="PF00010">
    <property type="entry name" value="HLH"/>
    <property type="match status" value="1"/>
</dbReference>
<dbReference type="SMART" id="SM00353">
    <property type="entry name" value="HLH"/>
    <property type="match status" value="1"/>
</dbReference>
<dbReference type="SUPFAM" id="SSF47459">
    <property type="entry name" value="HLH, helix-loop-helix DNA-binding domain"/>
    <property type="match status" value="1"/>
</dbReference>
<dbReference type="PROSITE" id="PS50888">
    <property type="entry name" value="BHLH"/>
    <property type="match status" value="1"/>
</dbReference>
<gene>
    <name type="primary">TCF12</name>
    <name type="synonym">BHLHB20</name>
    <name type="synonym">HEB</name>
    <name type="synonym">HTF4</name>
</gene>
<reference key="1">
    <citation type="journal article" date="1992" name="DNA Seq.">
        <title>The nucleotide sequence of the human transcription factor HTF4a cDNA.</title>
        <authorList>
            <person name="Zhang Y."/>
            <person name="Bina M."/>
        </authorList>
    </citation>
    <scope>NUCLEOTIDE SEQUENCE [MRNA] (ISOFORM 1)</scope>
</reference>
<reference key="2">
    <citation type="journal article" date="1992" name="Mol. Cell. Biol.">
        <title>HEB, a helix-loop-helix protein related to E2A and ITF2 that can modulate the DNA-binding ability of myogenic regulatory factors.</title>
        <authorList>
            <person name="Hu J.S."/>
            <person name="Olson E.N."/>
            <person name="Kingston R.E."/>
        </authorList>
    </citation>
    <scope>NUCLEOTIDE SEQUENCE [MRNA] (ISOFORM 1)</scope>
    <source>
        <tissue>Skeletal muscle</tissue>
    </source>
</reference>
<reference key="3">
    <citation type="journal article" date="2004" name="Nat. Genet.">
        <title>Complete sequencing and characterization of 21,243 full-length human cDNAs.</title>
        <authorList>
            <person name="Ota T."/>
            <person name="Suzuki Y."/>
            <person name="Nishikawa T."/>
            <person name="Otsuki T."/>
            <person name="Sugiyama T."/>
            <person name="Irie R."/>
            <person name="Wakamatsu A."/>
            <person name="Hayashi K."/>
            <person name="Sato H."/>
            <person name="Nagai K."/>
            <person name="Kimura K."/>
            <person name="Makita H."/>
            <person name="Sekine M."/>
            <person name="Obayashi M."/>
            <person name="Nishi T."/>
            <person name="Shibahara T."/>
            <person name="Tanaka T."/>
            <person name="Ishii S."/>
            <person name="Yamamoto J."/>
            <person name="Saito K."/>
            <person name="Kawai Y."/>
            <person name="Isono Y."/>
            <person name="Nakamura Y."/>
            <person name="Nagahari K."/>
            <person name="Murakami K."/>
            <person name="Yasuda T."/>
            <person name="Iwayanagi T."/>
            <person name="Wagatsuma M."/>
            <person name="Shiratori A."/>
            <person name="Sudo H."/>
            <person name="Hosoiri T."/>
            <person name="Kaku Y."/>
            <person name="Kodaira H."/>
            <person name="Kondo H."/>
            <person name="Sugawara M."/>
            <person name="Takahashi M."/>
            <person name="Kanda K."/>
            <person name="Yokoi T."/>
            <person name="Furuya T."/>
            <person name="Kikkawa E."/>
            <person name="Omura Y."/>
            <person name="Abe K."/>
            <person name="Kamihara K."/>
            <person name="Katsuta N."/>
            <person name="Sato K."/>
            <person name="Tanikawa M."/>
            <person name="Yamazaki M."/>
            <person name="Ninomiya K."/>
            <person name="Ishibashi T."/>
            <person name="Yamashita H."/>
            <person name="Murakawa K."/>
            <person name="Fujimori K."/>
            <person name="Tanai H."/>
            <person name="Kimata M."/>
            <person name="Watanabe M."/>
            <person name="Hiraoka S."/>
            <person name="Chiba Y."/>
            <person name="Ishida S."/>
            <person name="Ono Y."/>
            <person name="Takiguchi S."/>
            <person name="Watanabe S."/>
            <person name="Yosida M."/>
            <person name="Hotuta T."/>
            <person name="Kusano J."/>
            <person name="Kanehori K."/>
            <person name="Takahashi-Fujii A."/>
            <person name="Hara H."/>
            <person name="Tanase T.-O."/>
            <person name="Nomura Y."/>
            <person name="Togiya S."/>
            <person name="Komai F."/>
            <person name="Hara R."/>
            <person name="Takeuchi K."/>
            <person name="Arita M."/>
            <person name="Imose N."/>
            <person name="Musashino K."/>
            <person name="Yuuki H."/>
            <person name="Oshima A."/>
            <person name="Sasaki N."/>
            <person name="Aotsuka S."/>
            <person name="Yoshikawa Y."/>
            <person name="Matsunawa H."/>
            <person name="Ichihara T."/>
            <person name="Shiohata N."/>
            <person name="Sano S."/>
            <person name="Moriya S."/>
            <person name="Momiyama H."/>
            <person name="Satoh N."/>
            <person name="Takami S."/>
            <person name="Terashima Y."/>
            <person name="Suzuki O."/>
            <person name="Nakagawa S."/>
            <person name="Senoh A."/>
            <person name="Mizoguchi H."/>
            <person name="Goto Y."/>
            <person name="Shimizu F."/>
            <person name="Wakebe H."/>
            <person name="Hishigaki H."/>
            <person name="Watanabe T."/>
            <person name="Sugiyama A."/>
            <person name="Takemoto M."/>
            <person name="Kawakami B."/>
            <person name="Yamazaki M."/>
            <person name="Watanabe K."/>
            <person name="Kumagai A."/>
            <person name="Itakura S."/>
            <person name="Fukuzumi Y."/>
            <person name="Fujimori Y."/>
            <person name="Komiyama M."/>
            <person name="Tashiro H."/>
            <person name="Tanigami A."/>
            <person name="Fujiwara T."/>
            <person name="Ono T."/>
            <person name="Yamada K."/>
            <person name="Fujii Y."/>
            <person name="Ozaki K."/>
            <person name="Hirao M."/>
            <person name="Ohmori Y."/>
            <person name="Kawabata A."/>
            <person name="Hikiji T."/>
            <person name="Kobatake N."/>
            <person name="Inagaki H."/>
            <person name="Ikema Y."/>
            <person name="Okamoto S."/>
            <person name="Okitani R."/>
            <person name="Kawakami T."/>
            <person name="Noguchi S."/>
            <person name="Itoh T."/>
            <person name="Shigeta K."/>
            <person name="Senba T."/>
            <person name="Matsumura K."/>
            <person name="Nakajima Y."/>
            <person name="Mizuno T."/>
            <person name="Morinaga M."/>
            <person name="Sasaki M."/>
            <person name="Togashi T."/>
            <person name="Oyama M."/>
            <person name="Hata H."/>
            <person name="Watanabe M."/>
            <person name="Komatsu T."/>
            <person name="Mizushima-Sugano J."/>
            <person name="Satoh T."/>
            <person name="Shirai Y."/>
            <person name="Takahashi Y."/>
            <person name="Nakagawa K."/>
            <person name="Okumura K."/>
            <person name="Nagase T."/>
            <person name="Nomura N."/>
            <person name="Kikuchi H."/>
            <person name="Masuho Y."/>
            <person name="Yamashita R."/>
            <person name="Nakai K."/>
            <person name="Yada T."/>
            <person name="Nakamura Y."/>
            <person name="Ohara O."/>
            <person name="Isogai T."/>
            <person name="Sugano S."/>
        </authorList>
    </citation>
    <scope>NUCLEOTIDE SEQUENCE [LARGE SCALE MRNA] (ISOFORM 4)</scope>
    <source>
        <tissue>Trachea</tissue>
    </source>
</reference>
<reference key="4">
    <citation type="journal article" date="2007" name="BMC Genomics">
        <title>The full-ORF clone resource of the German cDNA consortium.</title>
        <authorList>
            <person name="Bechtel S."/>
            <person name="Rosenfelder H."/>
            <person name="Duda A."/>
            <person name="Schmidt C.P."/>
            <person name="Ernst U."/>
            <person name="Wellenreuther R."/>
            <person name="Mehrle A."/>
            <person name="Schuster C."/>
            <person name="Bahr A."/>
            <person name="Bloecker H."/>
            <person name="Heubner D."/>
            <person name="Hoerlein A."/>
            <person name="Michel G."/>
            <person name="Wedler H."/>
            <person name="Koehrer K."/>
            <person name="Ottenwaelder B."/>
            <person name="Poustka A."/>
            <person name="Wiemann S."/>
            <person name="Schupp I."/>
        </authorList>
    </citation>
    <scope>NUCLEOTIDE SEQUENCE [LARGE SCALE MRNA] (ISOFORMS 1 AND 2)</scope>
    <source>
        <tissue>Endometrium</tissue>
        <tissue>Skeletal muscle</tissue>
    </source>
</reference>
<reference key="5">
    <citation type="journal article" date="2006" name="Nature">
        <title>Analysis of the DNA sequence and duplication history of human chromosome 15.</title>
        <authorList>
            <person name="Zody M.C."/>
            <person name="Garber M."/>
            <person name="Sharpe T."/>
            <person name="Young S.K."/>
            <person name="Rowen L."/>
            <person name="O'Neill K."/>
            <person name="Whittaker C.A."/>
            <person name="Kamal M."/>
            <person name="Chang J.L."/>
            <person name="Cuomo C.A."/>
            <person name="Dewar K."/>
            <person name="FitzGerald M.G."/>
            <person name="Kodira C.D."/>
            <person name="Madan A."/>
            <person name="Qin S."/>
            <person name="Yang X."/>
            <person name="Abbasi N."/>
            <person name="Abouelleil A."/>
            <person name="Arachchi H.M."/>
            <person name="Baradarani L."/>
            <person name="Birditt B."/>
            <person name="Bloom S."/>
            <person name="Bloom T."/>
            <person name="Borowsky M.L."/>
            <person name="Burke J."/>
            <person name="Butler J."/>
            <person name="Cook A."/>
            <person name="DeArellano K."/>
            <person name="DeCaprio D."/>
            <person name="Dorris L. III"/>
            <person name="Dors M."/>
            <person name="Eichler E.E."/>
            <person name="Engels R."/>
            <person name="Fahey J."/>
            <person name="Fleetwood P."/>
            <person name="Friedman C."/>
            <person name="Gearin G."/>
            <person name="Hall J.L."/>
            <person name="Hensley G."/>
            <person name="Johnson E."/>
            <person name="Jones C."/>
            <person name="Kamat A."/>
            <person name="Kaur A."/>
            <person name="Locke D.P."/>
            <person name="Madan A."/>
            <person name="Munson G."/>
            <person name="Jaffe D.B."/>
            <person name="Lui A."/>
            <person name="Macdonald P."/>
            <person name="Mauceli E."/>
            <person name="Naylor J.W."/>
            <person name="Nesbitt R."/>
            <person name="Nicol R."/>
            <person name="O'Leary S.B."/>
            <person name="Ratcliffe A."/>
            <person name="Rounsley S."/>
            <person name="She X."/>
            <person name="Sneddon K.M.B."/>
            <person name="Stewart S."/>
            <person name="Sougnez C."/>
            <person name="Stone S.M."/>
            <person name="Topham K."/>
            <person name="Vincent D."/>
            <person name="Wang S."/>
            <person name="Zimmer A.R."/>
            <person name="Birren B.W."/>
            <person name="Hood L."/>
            <person name="Lander E.S."/>
            <person name="Nusbaum C."/>
        </authorList>
    </citation>
    <scope>NUCLEOTIDE SEQUENCE [LARGE SCALE GENOMIC DNA]</scope>
</reference>
<reference key="6">
    <citation type="submission" date="2005-07" db="EMBL/GenBank/DDBJ databases">
        <authorList>
            <person name="Mural R.J."/>
            <person name="Istrail S."/>
            <person name="Sutton G.G."/>
            <person name="Florea L."/>
            <person name="Halpern A.L."/>
            <person name="Mobarry C.M."/>
            <person name="Lippert R."/>
            <person name="Walenz B."/>
            <person name="Shatkay H."/>
            <person name="Dew I."/>
            <person name="Miller J.R."/>
            <person name="Flanigan M.J."/>
            <person name="Edwards N.J."/>
            <person name="Bolanos R."/>
            <person name="Fasulo D."/>
            <person name="Halldorsson B.V."/>
            <person name="Hannenhalli S."/>
            <person name="Turner R."/>
            <person name="Yooseph S."/>
            <person name="Lu F."/>
            <person name="Nusskern D.R."/>
            <person name="Shue B.C."/>
            <person name="Zheng X.H."/>
            <person name="Zhong F."/>
            <person name="Delcher A.L."/>
            <person name="Huson D.H."/>
            <person name="Kravitz S.A."/>
            <person name="Mouchard L."/>
            <person name="Reinert K."/>
            <person name="Remington K.A."/>
            <person name="Clark A.G."/>
            <person name="Waterman M.S."/>
            <person name="Eichler E.E."/>
            <person name="Adams M.D."/>
            <person name="Hunkapiller M.W."/>
            <person name="Myers E.W."/>
            <person name="Venter J.C."/>
        </authorList>
    </citation>
    <scope>NUCLEOTIDE SEQUENCE [LARGE SCALE GENOMIC DNA]</scope>
</reference>
<reference key="7">
    <citation type="journal article" date="2004" name="Genome Res.">
        <title>The status, quality, and expansion of the NIH full-length cDNA project: the Mammalian Gene Collection (MGC).</title>
        <authorList>
            <consortium name="The MGC Project Team"/>
        </authorList>
    </citation>
    <scope>NUCLEOTIDE SEQUENCE [LARGE SCALE MRNA] (ISOFORM 3)</scope>
    <source>
        <tissue>Brain</tissue>
    </source>
</reference>
<reference key="8">
    <citation type="journal article" date="1991" name="Nucleic Acids Res.">
        <title>HTF4: a new human helix-loop-helix protein.</title>
        <authorList>
            <person name="Zhang Y."/>
            <person name="Babin J."/>
            <person name="Feldhaus A.L."/>
            <person name="Singh H."/>
            <person name="Sharp P.A."/>
            <person name="Bina M."/>
        </authorList>
    </citation>
    <scope>NUCLEOTIDE SEQUENCE [MRNA] OF 352-682</scope>
</reference>
<reference key="9">
    <citation type="journal article" date="2002" name="Cytogenet. Genome Res.">
        <title>Genomic organization of human TCF12 gene and spliced mRNA variants producing isoforms of transcription factor HTF4.</title>
        <authorList>
            <person name="Gan T.I."/>
            <person name="Rowen L."/>
            <person name="Nesbitt R."/>
            <person name="Roe B.A."/>
            <person name="Wu H."/>
            <person name="Hu P."/>
            <person name="Yao Z."/>
            <person name="Kim U.J."/>
            <person name="O'Sickey T."/>
            <person name="Bina M."/>
        </authorList>
    </citation>
    <scope>GENE ORGANIZATION</scope>
    <scope>ALTERNATIVE SPLICING</scope>
</reference>
<reference key="10">
    <citation type="journal article" date="2006" name="Cancer Cell">
        <title>The tetramer structure of the Nervy homology two domain, NHR2, is critical for AML1/ETO's activity.</title>
        <authorList>
            <person name="Liu Y."/>
            <person name="Cheney M.D."/>
            <person name="Gaudet J.J."/>
            <person name="Chruszcz M."/>
            <person name="Lukasik S.M."/>
            <person name="Sugiyama D."/>
            <person name="Lary J."/>
            <person name="Cole J."/>
            <person name="Dauter Z."/>
            <person name="Minor W."/>
            <person name="Speck N.A."/>
            <person name="Bushweller J.H."/>
        </authorList>
    </citation>
    <scope>INTERACTION WITH RUNX1T1</scope>
</reference>
<reference key="11">
    <citation type="journal article" date="2006" name="Nat. Biotechnol.">
        <title>A probability-based approach for high-throughput protein phosphorylation analysis and site localization.</title>
        <authorList>
            <person name="Beausoleil S.A."/>
            <person name="Villen J."/>
            <person name="Gerber S.A."/>
            <person name="Rush J."/>
            <person name="Gygi S.P."/>
        </authorList>
    </citation>
    <scope>IDENTIFICATION BY MASS SPECTROMETRY [LARGE SCALE ANALYSIS]</scope>
    <source>
        <tissue>Cervix carcinoma</tissue>
    </source>
</reference>
<reference key="12">
    <citation type="journal article" date="2007" name="Genomics">
        <title>Nine-amino-acid transactivation domain: establishment and prediction utilities.</title>
        <authorList>
            <person name="Piskacek S."/>
            <person name="Gregor M."/>
            <person name="Nemethova M."/>
            <person name="Grabner M."/>
            <person name="Kovarik P."/>
            <person name="Piskacek M."/>
        </authorList>
    </citation>
    <scope>DOMAIN</scope>
</reference>
<reference key="13">
    <citation type="journal article" date="2007" name="Science">
        <title>ATM and ATR substrate analysis reveals extensive protein networks responsive to DNA damage.</title>
        <authorList>
            <person name="Matsuoka S."/>
            <person name="Ballif B.A."/>
            <person name="Smogorzewska A."/>
            <person name="McDonald E.R. III"/>
            <person name="Hurov K.E."/>
            <person name="Luo J."/>
            <person name="Bakalarski C.E."/>
            <person name="Zhao Z."/>
            <person name="Solimini N."/>
            <person name="Lerenthal Y."/>
            <person name="Shiloh Y."/>
            <person name="Gygi S.P."/>
            <person name="Elledge S.J."/>
        </authorList>
    </citation>
    <scope>IDENTIFICATION BY MASS SPECTROMETRY [LARGE SCALE ANALYSIS]</scope>
    <source>
        <tissue>Embryonic kidney</tissue>
    </source>
</reference>
<reference key="14">
    <citation type="journal article" date="2008" name="J. Proteome Res.">
        <title>Combining protein-based IMAC, peptide-based IMAC, and MudPIT for efficient phosphoproteomic analysis.</title>
        <authorList>
            <person name="Cantin G.T."/>
            <person name="Yi W."/>
            <person name="Lu B."/>
            <person name="Park S.K."/>
            <person name="Xu T."/>
            <person name="Lee J.-D."/>
            <person name="Yates J.R. III"/>
        </authorList>
    </citation>
    <scope>IDENTIFICATION BY MASS SPECTROMETRY [LARGE SCALE ANALYSIS]</scope>
    <source>
        <tissue>Cervix carcinoma</tissue>
    </source>
</reference>
<reference key="15">
    <citation type="journal article" date="2008" name="Proc. Natl. Acad. Sci. U.S.A.">
        <title>A quantitative atlas of mitotic phosphorylation.</title>
        <authorList>
            <person name="Dephoure N."/>
            <person name="Zhou C."/>
            <person name="Villen J."/>
            <person name="Beausoleil S.A."/>
            <person name="Bakalarski C.E."/>
            <person name="Elledge S.J."/>
            <person name="Gygi S.P."/>
        </authorList>
    </citation>
    <scope>PHOSPHORYLATION [LARGE SCALE ANALYSIS] AT THR-313</scope>
    <scope>IDENTIFICATION BY MASS SPECTROMETRY [LARGE SCALE ANALYSIS]</scope>
    <source>
        <tissue>Cervix carcinoma</tissue>
    </source>
</reference>
<reference key="16">
    <citation type="journal article" date="2009" name="Sci. Signal.">
        <title>Quantitative phosphoproteomic analysis of T cell receptor signaling reveals system-wide modulation of protein-protein interactions.</title>
        <authorList>
            <person name="Mayya V."/>
            <person name="Lundgren D.H."/>
            <person name="Hwang S.-I."/>
            <person name="Rezaul K."/>
            <person name="Wu L."/>
            <person name="Eng J.K."/>
            <person name="Rodionov V."/>
            <person name="Han D.K."/>
        </authorList>
    </citation>
    <scope>PHOSPHORYLATION [LARGE SCALE ANALYSIS] AT SER-67; SER-333 AND THR-557</scope>
    <scope>IDENTIFICATION BY MASS SPECTROMETRY [LARGE SCALE ANALYSIS]</scope>
    <source>
        <tissue>Leukemic T-cell</tissue>
    </source>
</reference>
<reference key="17">
    <citation type="journal article" date="2010" name="Sci. Signal.">
        <title>Quantitative phosphoproteomics reveals widespread full phosphorylation site occupancy during mitosis.</title>
        <authorList>
            <person name="Olsen J.V."/>
            <person name="Vermeulen M."/>
            <person name="Santamaria A."/>
            <person name="Kumar C."/>
            <person name="Miller M.L."/>
            <person name="Jensen L.J."/>
            <person name="Gnad F."/>
            <person name="Cox J."/>
            <person name="Jensen T.S."/>
            <person name="Nigg E.A."/>
            <person name="Brunak S."/>
            <person name="Mann M."/>
        </authorList>
    </citation>
    <scope>IDENTIFICATION BY MASS SPECTROMETRY [LARGE SCALE ANALYSIS]</scope>
    <source>
        <tissue>Cervix carcinoma</tissue>
    </source>
</reference>
<reference key="18">
    <citation type="journal article" date="2011" name="Sci. Signal.">
        <title>System-wide temporal characterization of the proteome and phosphoproteome of human embryonic stem cell differentiation.</title>
        <authorList>
            <person name="Rigbolt K.T."/>
            <person name="Prokhorova T.A."/>
            <person name="Akimov V."/>
            <person name="Henningsen J."/>
            <person name="Johansen P.T."/>
            <person name="Kratchmarova I."/>
            <person name="Kassem M."/>
            <person name="Mann M."/>
            <person name="Olsen J.V."/>
            <person name="Blagoev B."/>
        </authorList>
    </citation>
    <scope>PHOSPHORYLATION [LARGE SCALE ANALYSIS] AT SER-559</scope>
    <scope>IDENTIFICATION BY MASS SPECTROMETRY [LARGE SCALE ANALYSIS]</scope>
</reference>
<reference key="19">
    <citation type="journal article" date="2013" name="J. Proteome Res.">
        <title>Toward a comprehensive characterization of a human cancer cell phosphoproteome.</title>
        <authorList>
            <person name="Zhou H."/>
            <person name="Di Palma S."/>
            <person name="Preisinger C."/>
            <person name="Peng M."/>
            <person name="Polat A.N."/>
            <person name="Heck A.J."/>
            <person name="Mohammed S."/>
        </authorList>
    </citation>
    <scope>PHOSPHORYLATION [LARGE SCALE ANALYSIS] AT SER-47; SER-67; SER-79; SER-98; SER-116; THR-313; SER-333; SER-540; SER-558 AND SER-559</scope>
    <scope>IDENTIFICATION BY MASS SPECTROMETRY [LARGE SCALE ANALYSIS]</scope>
    <source>
        <tissue>Cervix carcinoma</tissue>
        <tissue>Erythroleukemia</tissue>
    </source>
</reference>
<reference key="20">
    <citation type="journal article" date="2014" name="J. Proteomics">
        <title>An enzyme assisted RP-RPLC approach for in-depth analysis of human liver phosphoproteome.</title>
        <authorList>
            <person name="Bian Y."/>
            <person name="Song C."/>
            <person name="Cheng K."/>
            <person name="Dong M."/>
            <person name="Wang F."/>
            <person name="Huang J."/>
            <person name="Sun D."/>
            <person name="Wang L."/>
            <person name="Ye M."/>
            <person name="Zou H."/>
        </authorList>
    </citation>
    <scope>IDENTIFICATION BY MASS SPECTROMETRY [LARGE SCALE ANALYSIS]</scope>
    <source>
        <tissue>Liver</tissue>
    </source>
</reference>
<reference key="21">
    <citation type="journal article" date="2014" name="Nat. Struct. Mol. Biol.">
        <title>Uncovering global SUMOylation signaling networks in a site-specific manner.</title>
        <authorList>
            <person name="Hendriks I.A."/>
            <person name="D'Souza R.C."/>
            <person name="Yang B."/>
            <person name="Verlaan-de Vries M."/>
            <person name="Mann M."/>
            <person name="Vertegaal A.C."/>
        </authorList>
    </citation>
    <scope>SUMOYLATION [LARGE SCALE ANALYSIS] AT LYS-519 AND LYS-550</scope>
    <scope>IDENTIFICATION BY MASS SPECTROMETRY [LARGE SCALE ANALYSIS]</scope>
</reference>
<reference key="22">
    <citation type="journal article" date="2015" name="Mol. Cell. Proteomics">
        <title>System-wide analysis of SUMOylation dynamics in response to replication stress reveals novel small ubiquitin-like modified target proteins and acceptor lysines relevant for genome stability.</title>
        <authorList>
            <person name="Xiao Z."/>
            <person name="Chang J.G."/>
            <person name="Hendriks I.A."/>
            <person name="Sigurdsson J.O."/>
            <person name="Olsen J.V."/>
            <person name="Vertegaal A.C."/>
        </authorList>
    </citation>
    <scope>SUMOYLATION [LARGE SCALE ANALYSIS] AT LYS-519</scope>
    <scope>IDENTIFICATION BY MASS SPECTROMETRY [LARGE SCALE ANALYSIS]</scope>
</reference>
<reference key="23">
    <citation type="journal article" date="2017" name="Nat. Struct. Mol. Biol.">
        <title>Site-specific mapping of the human SUMO proteome reveals co-modification with phosphorylation.</title>
        <authorList>
            <person name="Hendriks I.A."/>
            <person name="Lyon D."/>
            <person name="Young C."/>
            <person name="Jensen L.J."/>
            <person name="Vertegaal A.C."/>
            <person name="Nielsen M.L."/>
        </authorList>
    </citation>
    <scope>SUMOYLATION [LARGE SCALE ANALYSIS] AT LYS-110; LYS-181; LYS-519; LYS-609 AND LYS-653</scope>
    <scope>IDENTIFICATION BY MASS SPECTROMETRY [LARGE SCALE ANALYSIS]</scope>
</reference>
<reference key="24">
    <citation type="journal article" date="2013" name="Nature">
        <title>A stable transcription factor complex nucleated by oligomeric AML1-ETO controls leukaemogenesis.</title>
        <authorList>
            <person name="Sun X.J."/>
            <person name="Wang Z."/>
            <person name="Wang L."/>
            <person name="Jiang Y."/>
            <person name="Kost N."/>
            <person name="Soong T.D."/>
            <person name="Chen W.Y."/>
            <person name="Tang Z."/>
            <person name="Nakadai T."/>
            <person name="Elemento O."/>
            <person name="Fischle W."/>
            <person name="Melnick A."/>
            <person name="Patel D.J."/>
            <person name="Nimer S.D."/>
            <person name="Roeder R.G."/>
        </authorList>
    </citation>
    <scope>X-RAY CRYSTALLOGRAPHY (2.91 ANGSTROMS) OF 177-200 IN COMPLEX WITH RUNX1T1</scope>
    <scope>INTERACTION WITH AML1-MTG8/ETO</scope>
    <scope>MUTAGENESIS OF PRO-187; PRO-191 AND SER-192</scope>
</reference>
<reference key="25">
    <citation type="journal article" date="2014" name="Am. J. Hum. Genet.">
        <title>Mutations affecting the BHLHA9 DNA-binding domain cause MSSD, mesoaxial synostotic syndactyly with phalangeal reduction, Malik-Percin type.</title>
        <authorList>
            <person name="Malik S."/>
            <person name="Percin F.E."/>
            <person name="Bornholdt D."/>
            <person name="Albrecht B."/>
            <person name="Percesepe A."/>
            <person name="Koch M.C."/>
            <person name="Landi A."/>
            <person name="Fritz B."/>
            <person name="Khan R."/>
            <person name="Mumtaz S."/>
            <person name="Akarsu N.A."/>
            <person name="Grzeschik K.H."/>
        </authorList>
    </citation>
    <scope>INTERACTION WITH BHLHA9</scope>
</reference>
<reference key="26">
    <citation type="journal article" date="2020" name="Hum. Mol. Genet.">
        <title>TCF12 haploinsufficiency causes autosomal dominant Kallmann syndrome and reveals network-level interactions between causal loci.</title>
        <authorList>
            <person name="Davis E.E."/>
            <person name="Balasubramanian R."/>
            <person name="Kupchinsky Z.A."/>
            <person name="Keefe D.L."/>
            <person name="Plummer L."/>
            <person name="Khan K."/>
            <person name="Meczekalski B."/>
            <person name="Heath K.E."/>
            <person name="Lopez-Gonzalez V."/>
            <person name="Ballesta-Martinez M.J."/>
            <person name="Margabanthu G."/>
            <person name="Price S."/>
            <person name="Greening J."/>
            <person name="Brauner R."/>
            <person name="Valenzuela I."/>
            <person name="Cusco I."/>
            <person name="Fernandez-Alvarez P."/>
            <person name="Wierman M.E."/>
            <person name="Li T."/>
            <person name="Lage K."/>
            <person name="Barroso P.S."/>
            <person name="Chan Y.M."/>
            <person name="Crowley W.F."/>
            <person name="Katsanis N."/>
        </authorList>
    </citation>
    <scope>INVOLVEMENT IN HH26</scope>
    <scope>FUNCTION</scope>
</reference>
<reference key="27">
    <citation type="journal article" date="2009" name="Blood">
        <title>Structure of the AML1-ETO eTAFH domain-HEB peptide complex and its contribution to AML1-ETO activity.</title>
        <authorList>
            <person name="Park S."/>
            <person name="Chen W."/>
            <person name="Cierpicki T."/>
            <person name="Tonelli M."/>
            <person name="Cai X."/>
            <person name="Speck N.A."/>
            <person name="Bushweller J.H."/>
        </authorList>
    </citation>
    <scope>STRUCTURE BY NMR OF 11-28 IN COMPLEX WITH RUNX1T1</scope>
    <scope>SUBUNIT</scope>
</reference>
<reference key="28">
    <citation type="journal article" date="2013" name="Nat. Genet.">
        <title>Mutations in TCF12, encoding a basic helix-loop-helix partner of TWIST1, are a frequent cause of coronal craniosynostosis.</title>
        <authorList>
            <consortium name="500 Whole-Genome Sequences (WGS500) Consortium"/>
            <person name="Sharma V.P."/>
            <person name="Fenwick A.L."/>
            <person name="Brockop M.S."/>
            <person name="McGowan S.J."/>
            <person name="Goos J.A."/>
            <person name="Hoogeboom A.J."/>
            <person name="Brady A.F."/>
            <person name="Jeelani N.O."/>
            <person name="Lynch S.A."/>
            <person name="Mulliken J.B."/>
            <person name="Murray D.J."/>
            <person name="Phipps J.M."/>
            <person name="Sweeney E."/>
            <person name="Tomkins S.E."/>
            <person name="Wilson L.C."/>
            <person name="Bennett S."/>
            <person name="Cornall R.J."/>
            <person name="Broxholme J."/>
            <person name="Kanapin A."/>
            <person name="Johnson D."/>
            <person name="Wall S.A."/>
            <person name="van der Spek P.J."/>
            <person name="Mathijssen I.M."/>
            <person name="Maxson R.E."/>
            <person name="Twigg S.R."/>
            <person name="Wilkie A.O."/>
        </authorList>
    </citation>
    <scope>VARIANTS CRS3 PRO-600 AND GLU-614</scope>
</reference>
<reference key="29">
    <citation type="journal article" date="2015" name="Eur. J. Hum. Genet.">
        <title>Expanding the mutation spectrum in 182 Spanish probands with craniosynostosis: identification and characterization of novel TCF12 variants.</title>
        <authorList>
            <person name="Paumard-Hernandez B."/>
            <person name="Berges-Soria J."/>
            <person name="Barroso E."/>
            <person name="Rivera-Pedroza C.I."/>
            <person name="Perez-Carrizosa V."/>
            <person name="Benito-Sanz S."/>
            <person name="Lopez-Messa E."/>
            <person name="Santos F."/>
            <person name="Garcia-Recuero I.I."/>
            <person name="Romance A."/>
            <person name="Ballesta-Martinez J.M."/>
            <person name="Lopez-Gonzalez V."/>
            <person name="Campos-Barros A."/>
            <person name="Cruz J."/>
            <person name="Guillen-Navarro E."/>
            <person name="Sanchez Del Pozo J."/>
            <person name="Lapunzina P."/>
            <person name="Garcia-Minaur S."/>
            <person name="Heath K.E."/>
        </authorList>
    </citation>
    <scope>VARIANT CRS3 ARG-483</scope>
</reference>
<protein>
    <recommendedName>
        <fullName>Transcription factor 12</fullName>
        <shortName>TCF-12</shortName>
    </recommendedName>
    <alternativeName>
        <fullName>Class B basic helix-loop-helix protein 20</fullName>
        <shortName>bHLHb20</shortName>
    </alternativeName>
    <alternativeName>
        <fullName>DNA-binding protein HTF4</fullName>
    </alternativeName>
    <alternativeName>
        <fullName>E-box-binding protein</fullName>
    </alternativeName>
    <alternativeName>
        <fullName>Transcription factor HTF-4</fullName>
    </alternativeName>
</protein>
<evidence type="ECO:0000250" key="1">
    <source>
        <dbReference type="UniProtKB" id="Q61286"/>
    </source>
</evidence>
<evidence type="ECO:0000255" key="2">
    <source>
        <dbReference type="PROSITE-ProRule" id="PRU00981"/>
    </source>
</evidence>
<evidence type="ECO:0000256" key="3">
    <source>
        <dbReference type="SAM" id="MobiDB-lite"/>
    </source>
</evidence>
<evidence type="ECO:0000269" key="4">
    <source>
    </source>
</evidence>
<evidence type="ECO:0000269" key="5">
    <source>
    </source>
</evidence>
<evidence type="ECO:0000269" key="6">
    <source>
    </source>
</evidence>
<evidence type="ECO:0000269" key="7">
    <source>
    </source>
</evidence>
<evidence type="ECO:0000269" key="8">
    <source>
    </source>
</evidence>
<evidence type="ECO:0000269" key="9">
    <source>
    </source>
</evidence>
<evidence type="ECO:0000269" key="10">
    <source>
    </source>
</evidence>
<evidence type="ECO:0000269" key="11">
    <source>
    </source>
</evidence>
<evidence type="ECO:0000303" key="12">
    <source>
    </source>
</evidence>
<evidence type="ECO:0000303" key="13">
    <source>
    </source>
</evidence>
<evidence type="ECO:0000303" key="14">
    <source>
    </source>
</evidence>
<evidence type="ECO:0000305" key="15"/>
<evidence type="ECO:0007744" key="16">
    <source>
    </source>
</evidence>
<evidence type="ECO:0007744" key="17">
    <source>
    </source>
</evidence>
<evidence type="ECO:0007744" key="18">
    <source>
    </source>
</evidence>
<evidence type="ECO:0007744" key="19">
    <source>
    </source>
</evidence>
<evidence type="ECO:0007744" key="20">
    <source>
    </source>
</evidence>
<evidence type="ECO:0007744" key="21">
    <source>
    </source>
</evidence>
<evidence type="ECO:0007744" key="22">
    <source>
    </source>
</evidence>
<evidence type="ECO:0007829" key="23">
    <source>
        <dbReference type="PDB" id="2KNH"/>
    </source>
</evidence>
<accession>Q99081</accession>
<accession>B4E1W1</accession>
<accession>Q7Z3D9</accession>
<accession>Q86TC1</accession>
<accession>Q86VM2</accession>
<name>HTF4_HUMAN</name>
<organism>
    <name type="scientific">Homo sapiens</name>
    <name type="common">Human</name>
    <dbReference type="NCBI Taxonomy" id="9606"/>
    <lineage>
        <taxon>Eukaryota</taxon>
        <taxon>Metazoa</taxon>
        <taxon>Chordata</taxon>
        <taxon>Craniata</taxon>
        <taxon>Vertebrata</taxon>
        <taxon>Euteleostomi</taxon>
        <taxon>Mammalia</taxon>
        <taxon>Eutheria</taxon>
        <taxon>Euarchontoglires</taxon>
        <taxon>Primates</taxon>
        <taxon>Haplorrhini</taxon>
        <taxon>Catarrhini</taxon>
        <taxon>Hominidae</taxon>
        <taxon>Homo</taxon>
    </lineage>
</organism>
<proteinExistence type="evidence at protein level"/>
<comment type="function">
    <text evidence="1 11">Transcriptional regulator. Involved in the initiation of neuronal differentiation. Activates transcription by binding to the E box (5'-CANNTG-3') (By similarity). May be involved in the functional network that regulates the development of the GnRH axis (PubMed:32620954).</text>
</comment>
<comment type="subunit">
    <text evidence="1 4 6 8 10">Efficient DNA binding requires dimerization with another bHLH protein. Forms homo- or heterooligomers with myogenin, E12 and ITF2 proteins. Interacts with PTF1A. Interacts with NEUROD2 (By similarity). Interacts with RUNX1T1. Interacts with AML1-MTG8/ETO (via nervy homology region 2 in oligomerized form) (PubMed:23812588). Interacts with BHLHA9 (PubMed:25466284).</text>
</comment>
<comment type="interaction">
    <interactant intactId="EBI-722877">
        <id>Q99081</id>
    </interactant>
    <interactant intactId="EBI-8643161">
        <id>Q9NX04</id>
        <label>AIRIM</label>
    </interactant>
    <organismsDiffer>false</organismsDiffer>
    <experiments>3</experiments>
</comment>
<comment type="interaction">
    <interactant intactId="EBI-722877">
        <id>Q99081</id>
    </interactant>
    <interactant intactId="EBI-1049469">
        <id>Q8IUR7</id>
        <label>ARMC8</label>
    </interactant>
    <organismsDiffer>false</organismsDiffer>
    <experiments>3</experiments>
</comment>
<comment type="interaction">
    <interactant intactId="EBI-722877">
        <id>Q99081</id>
    </interactant>
    <interactant intactId="EBI-10254793">
        <id>Q6XD76</id>
        <label>ASCL4</label>
    </interactant>
    <organismsDiffer>false</organismsDiffer>
    <experiments>4</experiments>
</comment>
<comment type="interaction">
    <interactant intactId="EBI-722877">
        <id>Q99081</id>
    </interactant>
    <interactant intactId="EBI-718468">
        <id>Q96MC5</id>
        <label>BMERB1</label>
    </interactant>
    <organismsDiffer>false</organismsDiffer>
    <experiments>3</experiments>
</comment>
<comment type="interaction">
    <interactant intactId="EBI-722877">
        <id>Q99081</id>
    </interactant>
    <interactant intactId="EBI-711290">
        <id>P42773</id>
        <label>CDKN2C</label>
    </interactant>
    <organismsDiffer>false</organismsDiffer>
    <experiments>5</experiments>
</comment>
<comment type="interaction">
    <interactant intactId="EBI-722877">
        <id>Q99081</id>
    </interactant>
    <interactant intactId="EBI-749051">
        <id>Q8IYR0</id>
        <label>CFAP206</label>
    </interactant>
    <organismsDiffer>false</organismsDiffer>
    <experiments>3</experiments>
</comment>
<comment type="interaction">
    <interactant intactId="EBI-722877">
        <id>Q99081</id>
    </interactant>
    <interactant intactId="EBI-2654687">
        <id>O75575</id>
        <label>CRCP</label>
    </interactant>
    <organismsDiffer>false</organismsDiffer>
    <experiments>3</experiments>
</comment>
<comment type="interaction">
    <interactant intactId="EBI-722877">
        <id>Q99081</id>
    </interactant>
    <interactant intactId="EBI-10240074">
        <id>Q3B7T1-5</id>
        <label>EDRF1</label>
    </interactant>
    <organismsDiffer>false</organismsDiffer>
    <experiments>3</experiments>
</comment>
<comment type="interaction">
    <interactant intactId="EBI-722877">
        <id>Q99081</id>
    </interactant>
    <interactant intactId="EBI-1759806">
        <id>O75593</id>
        <label>FOXH1</label>
    </interactant>
    <organismsDiffer>false</organismsDiffer>
    <experiments>2</experiments>
</comment>
<comment type="interaction">
    <interactant intactId="EBI-722877">
        <id>Q99081</id>
    </interactant>
    <interactant intactId="EBI-5460660">
        <id>Q96MH2</id>
        <label>HEXIM2</label>
    </interactant>
    <organismsDiffer>false</organismsDiffer>
    <experiments>6</experiments>
</comment>
<comment type="interaction">
    <interactant intactId="EBI-722877">
        <id>Q99081</id>
    </interactant>
    <interactant intactId="EBI-10295883">
        <id>Q9BPY8</id>
        <label>HOPX</label>
    </interactant>
    <organismsDiffer>false</organismsDiffer>
    <experiments>3</experiments>
</comment>
<comment type="interaction">
    <interactant intactId="EBI-722877">
        <id>Q99081</id>
    </interactant>
    <interactant intactId="EBI-1215527">
        <id>P41134</id>
        <label>ID1</label>
    </interactant>
    <organismsDiffer>false</organismsDiffer>
    <experiments>3</experiments>
</comment>
<comment type="interaction">
    <interactant intactId="EBI-722877">
        <id>Q99081</id>
    </interactant>
    <interactant intactId="EBI-713450">
        <id>Q02363</id>
        <label>ID2</label>
    </interactant>
    <organismsDiffer>false</organismsDiffer>
    <experiments>3</experiments>
</comment>
<comment type="interaction">
    <interactant intactId="EBI-722877">
        <id>Q99081</id>
    </interactant>
    <interactant intactId="EBI-1387094">
        <id>Q02535</id>
        <label>ID3</label>
    </interactant>
    <organismsDiffer>false</organismsDiffer>
    <experiments>5</experiments>
</comment>
<comment type="interaction">
    <interactant intactId="EBI-722877">
        <id>Q99081</id>
    </interactant>
    <interactant intactId="EBI-10293291">
        <id>Q96S90</id>
        <label>LYSMD1</label>
    </interactant>
    <organismsDiffer>false</organismsDiffer>
    <experiments>3</experiments>
</comment>
<comment type="interaction">
    <interactant intactId="EBI-722877">
        <id>Q99081</id>
    </interactant>
    <interactant intactId="EBI-947402">
        <id>O60336</id>
        <label>MAPKBP1</label>
    </interactant>
    <organismsDiffer>false</organismsDiffer>
    <experiments>3</experiments>
</comment>
<comment type="interaction">
    <interactant intactId="EBI-722877">
        <id>Q99081</id>
    </interactant>
    <interactant intactId="EBI-5773143">
        <id>Q6P2C6</id>
        <label>MLLT6</label>
    </interactant>
    <organismsDiffer>false</organismsDiffer>
    <experiments>3</experiments>
</comment>
<comment type="interaction">
    <interactant intactId="EBI-722877">
        <id>Q99081</id>
    </interactant>
    <interactant intactId="EBI-10269566">
        <id>Q8NDC4</id>
        <label>MORN4</label>
    </interactant>
    <organismsDiffer>false</organismsDiffer>
    <experiments>3</experiments>
</comment>
<comment type="interaction">
    <interactant intactId="EBI-722877">
        <id>Q99081</id>
    </interactant>
    <interactant intactId="EBI-10277137">
        <id>Q8WVZ3</id>
        <label>MORN4</label>
    </interactant>
    <organismsDiffer>false</organismsDiffer>
    <experiments>3</experiments>
</comment>
<comment type="interaction">
    <interactant intactId="EBI-722877">
        <id>Q99081</id>
    </interactant>
    <interactant intactId="EBI-5659266">
        <id>P23409</id>
        <label>MYF6</label>
    </interactant>
    <organismsDiffer>false</organismsDiffer>
    <experiments>3</experiments>
</comment>
<comment type="interaction">
    <interactant intactId="EBI-722877">
        <id>Q99081</id>
    </interactant>
    <interactant intactId="EBI-3906629">
        <id>P15173</id>
        <label>MYOG</label>
    </interactant>
    <organismsDiffer>false</organismsDiffer>
    <experiments>2</experiments>
</comment>
<comment type="interaction">
    <interactant intactId="EBI-722877">
        <id>Q99081</id>
    </interactant>
    <interactant intactId="EBI-372578">
        <id>Q9UJ70</id>
        <label>NAGK</label>
    </interactant>
    <organismsDiffer>false</organismsDiffer>
    <experiments>3</experiments>
</comment>
<comment type="interaction">
    <interactant intactId="EBI-722877">
        <id>Q99081</id>
    </interactant>
    <interactant intactId="EBI-10328570">
        <id>Q9Y4Z2</id>
        <label>NEUROG3</label>
    </interactant>
    <organismsDiffer>false</organismsDiffer>
    <experiments>6</experiments>
</comment>
<comment type="interaction">
    <interactant intactId="EBI-722877">
        <id>Q99081</id>
    </interactant>
    <interactant intactId="EBI-9057006">
        <id>Q9UJX0</id>
        <label>OSGIN1</label>
    </interactant>
    <organismsDiffer>false</organismsDiffer>
    <experiments>4</experiments>
</comment>
<comment type="interaction">
    <interactant intactId="EBI-722877">
        <id>Q99081</id>
    </interactant>
    <interactant intactId="EBI-359352">
        <id>P25786</id>
        <label>PSMA1</label>
    </interactant>
    <organismsDiffer>false</organismsDiffer>
    <experiments>4</experiments>
</comment>
<comment type="interaction">
    <interactant intactId="EBI-722877">
        <id>Q99081</id>
    </interactant>
    <interactant intactId="EBI-347462">
        <id>P47897</id>
        <label>QARS1</label>
    </interactant>
    <organismsDiffer>false</organismsDiffer>
    <experiments>4</experiments>
</comment>
<comment type="interaction">
    <interactant intactId="EBI-722877">
        <id>Q99081</id>
    </interactant>
    <interactant intactId="EBI-10209725">
        <id>P47897-2</id>
        <label>QARS1</label>
    </interactant>
    <organismsDiffer>false</organismsDiffer>
    <experiments>3</experiments>
</comment>
<comment type="interaction">
    <interactant intactId="EBI-722877">
        <id>Q99081</id>
    </interactant>
    <interactant intactId="EBI-10239181">
        <id>Q1RLL8</id>
        <label>RNASEL</label>
    </interactant>
    <organismsDiffer>false</organismsDiffer>
    <experiments>3</experiments>
</comment>
<comment type="interaction">
    <interactant intactId="EBI-722877">
        <id>Q99081</id>
    </interactant>
    <interactant intactId="EBI-742688">
        <id>Q9NZD8</id>
        <label>SPG21</label>
    </interactant>
    <organismsDiffer>false</organismsDiffer>
    <experiments>4</experiments>
</comment>
<comment type="interaction">
    <interactant intactId="EBI-722877">
        <id>Q99081</id>
    </interactant>
    <interactant intactId="EBI-750459">
        <id>P30626</id>
        <label>SRI</label>
    </interactant>
    <organismsDiffer>false</organismsDiffer>
    <experiments>3</experiments>
</comment>
<comment type="interaction">
    <interactant intactId="EBI-722877">
        <id>Q99081</id>
    </interactant>
    <interactant intactId="EBI-749537">
        <id>P42229</id>
        <label>STAT5A</label>
    </interactant>
    <organismsDiffer>false</organismsDiffer>
    <experiments>3</experiments>
</comment>
<comment type="interaction">
    <interactant intactId="EBI-722877">
        <id>Q99081</id>
    </interactant>
    <interactant intactId="EBI-749295">
        <id>O75716</id>
        <label>STK16</label>
    </interactant>
    <organismsDiffer>false</organismsDiffer>
    <experiments>3</experiments>
</comment>
<comment type="interaction">
    <interactant intactId="EBI-722877">
        <id>Q99081</id>
    </interactant>
    <interactant intactId="EBI-1753878">
        <id>P17542</id>
        <label>TAL1</label>
    </interactant>
    <organismsDiffer>false</organismsDiffer>
    <experiments>7</experiments>
</comment>
<comment type="interaction">
    <interactant intactId="EBI-722877">
        <id>Q99081</id>
    </interactant>
    <interactant intactId="EBI-2341648">
        <id>Q6ZMU5</id>
        <label>TRIM72</label>
    </interactant>
    <organismsDiffer>false</organismsDiffer>
    <experiments>3</experiments>
</comment>
<comment type="interaction">
    <interactant intactId="EBI-722877">
        <id>Q99081</id>
    </interactant>
    <interactant intactId="EBI-21353855">
        <id>Q99598</id>
        <label>TSNAX</label>
    </interactant>
    <organismsDiffer>false</organismsDiffer>
    <experiments>3</experiments>
</comment>
<comment type="interaction">
    <interactant intactId="EBI-722877">
        <id>Q99081</id>
    </interactant>
    <interactant intactId="EBI-1797313">
        <id>Q8WVJ9</id>
        <label>TWIST2</label>
    </interactant>
    <organismsDiffer>false</organismsDiffer>
    <experiments>5</experiments>
</comment>
<comment type="interaction">
    <interactant intactId="EBI-722877">
        <id>Q99081</id>
    </interactant>
    <interactant intactId="EBI-10243107">
        <id>Q548N1</id>
        <label>VPS28</label>
    </interactant>
    <organismsDiffer>false</organismsDiffer>
    <experiments>3</experiments>
</comment>
<comment type="interaction">
    <interactant intactId="EBI-722877">
        <id>Q99081</id>
    </interactant>
    <interactant intactId="EBI-25475885">
        <id>PRO_0000449629</id>
        <label>rep</label>
        <dbReference type="UniProtKB" id="P0DTD1"/>
    </interactant>
    <organismsDiffer>true</organismsDiffer>
    <experiments>3</experiments>
</comment>
<comment type="interaction">
    <interactant intactId="EBI-11952764">
        <id>Q99081-3</id>
    </interactant>
    <interactant intactId="EBI-10186132">
        <id>Q0P5N6</id>
        <label>ARL16</label>
    </interactant>
    <organismsDiffer>false</organismsDiffer>
    <experiments>3</experiments>
</comment>
<comment type="interaction">
    <interactant intactId="EBI-11952764">
        <id>Q99081-3</id>
    </interactant>
    <interactant intactId="EBI-12108222">
        <id>Q9NQ33</id>
        <label>ASCL3</label>
    </interactant>
    <organismsDiffer>false</organismsDiffer>
    <experiments>3</experiments>
</comment>
<comment type="interaction">
    <interactant intactId="EBI-11952764">
        <id>Q99081-3</id>
    </interactant>
    <interactant intactId="EBI-10254793">
        <id>Q6XD76</id>
        <label>ASCL4</label>
    </interactant>
    <organismsDiffer>false</organismsDiffer>
    <experiments>3</experiments>
</comment>
<comment type="interaction">
    <interactant intactId="EBI-11952764">
        <id>Q99081-3</id>
    </interactant>
    <interactant intactId="EBI-741406">
        <id>P51946</id>
        <label>CCNH</label>
    </interactant>
    <organismsDiffer>false</organismsDiffer>
    <experiments>3</experiments>
</comment>
<comment type="interaction">
    <interactant intactId="EBI-11952764">
        <id>Q99081-3</id>
    </interactant>
    <interactant intactId="EBI-11983537">
        <id>Q86Y33-5</id>
        <label>CDC20B</label>
    </interactant>
    <organismsDiffer>false</organismsDiffer>
    <experiments>3</experiments>
</comment>
<comment type="interaction">
    <interactant intactId="EBI-11952764">
        <id>Q99081-3</id>
    </interactant>
    <interactant intactId="EBI-711290">
        <id>P42773</id>
        <label>CDKN2C</label>
    </interactant>
    <organismsDiffer>false</organismsDiffer>
    <experiments>4</experiments>
</comment>
<comment type="interaction">
    <interactant intactId="EBI-11952764">
        <id>Q99081-3</id>
    </interactant>
    <interactant intactId="EBI-456371">
        <id>P61024</id>
        <label>CKS1B</label>
    </interactant>
    <organismsDiffer>false</organismsDiffer>
    <experiments>3</experiments>
</comment>
<comment type="interaction">
    <interactant intactId="EBI-11952764">
        <id>Q99081-3</id>
    </interactant>
    <interactant intactId="EBI-11980535">
        <id>P51800-3</id>
        <label>CLCNKA</label>
    </interactant>
    <organismsDiffer>false</organismsDiffer>
    <experiments>3</experiments>
</comment>
<comment type="interaction">
    <interactant intactId="EBI-11952764">
        <id>Q99081-3</id>
    </interactant>
    <interactant intactId="EBI-351257">
        <id>P26196</id>
        <label>DDX6</label>
    </interactant>
    <organismsDiffer>false</organismsDiffer>
    <experiments>3</experiments>
</comment>
<comment type="interaction">
    <interactant intactId="EBI-11952764">
        <id>Q99081-3</id>
    </interactant>
    <interactant intactId="EBI-10182490">
        <id>O15197-2</id>
        <label>EPHB6</label>
    </interactant>
    <organismsDiffer>false</organismsDiffer>
    <experiments>3</experiments>
</comment>
<comment type="interaction">
    <interactant intactId="EBI-11952764">
        <id>Q99081-3</id>
    </interactant>
    <interactant intactId="EBI-742102">
        <id>Q8IYI6</id>
        <label>EXOC8</label>
    </interactant>
    <organismsDiffer>false</organismsDiffer>
    <experiments>3</experiments>
</comment>
<comment type="interaction">
    <interactant intactId="EBI-11952764">
        <id>Q99081-3</id>
    </interactant>
    <interactant intactId="EBI-742802">
        <id>Q9Y247</id>
        <label>FAM50B</label>
    </interactant>
    <organismsDiffer>false</organismsDiffer>
    <experiments>3</experiments>
</comment>
<comment type="interaction">
    <interactant intactId="EBI-11952764">
        <id>Q99081-3</id>
    </interactant>
    <interactant intactId="EBI-11976617">
        <id>Q6QHK4</id>
        <label>FIGLA</label>
    </interactant>
    <organismsDiffer>false</organismsDiffer>
    <experiments>3</experiments>
</comment>
<comment type="interaction">
    <interactant intactId="EBI-11952764">
        <id>Q99081-3</id>
    </interactant>
    <interactant intactId="EBI-11991632">
        <id>Q14451-3</id>
        <label>GRB7</label>
    </interactant>
    <organismsDiffer>false</organismsDiffer>
    <experiments>3</experiments>
</comment>
<comment type="interaction">
    <interactant intactId="EBI-11952764">
        <id>Q99081-3</id>
    </interactant>
    <interactant intactId="EBI-740290">
        <id>Q969Y2</id>
        <label>GTPBP3</label>
    </interactant>
    <organismsDiffer>false</organismsDiffer>
    <experiments>3</experiments>
</comment>
<comment type="interaction">
    <interactant intactId="EBI-11952764">
        <id>Q99081-3</id>
    </interactant>
    <interactant intactId="EBI-11320290">
        <id>O96004</id>
        <label>HAND1</label>
    </interactant>
    <organismsDiffer>false</organismsDiffer>
    <experiments>3</experiments>
</comment>
<comment type="interaction">
    <interactant intactId="EBI-11952764">
        <id>Q99081-3</id>
    </interactant>
    <interactant intactId="EBI-13086076">
        <id>P61296-2</id>
        <label>HAND2</label>
    </interactant>
    <organismsDiffer>false</organismsDiffer>
    <experiments>3</experiments>
</comment>
<comment type="interaction">
    <interactant intactId="EBI-11952764">
        <id>Q99081-3</id>
    </interactant>
    <interactant intactId="EBI-5460660">
        <id>Q96MH2</id>
        <label>HEXIM2</label>
    </interactant>
    <organismsDiffer>false</organismsDiffer>
    <experiments>4</experiments>
</comment>
<comment type="interaction">
    <interactant intactId="EBI-11952764">
        <id>Q99081-3</id>
    </interactant>
    <interactant intactId="EBI-1215527">
        <id>P41134</id>
        <label>ID1</label>
    </interactant>
    <organismsDiffer>false</organismsDiffer>
    <experiments>3</experiments>
</comment>
<comment type="interaction">
    <interactant intactId="EBI-11952764">
        <id>Q99081-3</id>
    </interactant>
    <interactant intactId="EBI-1387094">
        <id>Q02535</id>
        <label>ID3</label>
    </interactant>
    <organismsDiffer>false</organismsDiffer>
    <experiments>4</experiments>
</comment>
<comment type="interaction">
    <interactant intactId="EBI-11952764">
        <id>Q99081-3</id>
    </interactant>
    <interactant intactId="EBI-739832">
        <id>Q8TBB1</id>
        <label>LNX1</label>
    </interactant>
    <organismsDiffer>false</organismsDiffer>
    <experiments>3</experiments>
</comment>
<comment type="interaction">
    <interactant intactId="EBI-11952764">
        <id>Q99081-3</id>
    </interactant>
    <interactant intactId="EBI-10269566">
        <id>Q8NDC4</id>
        <label>MORN4</label>
    </interactant>
    <organismsDiffer>false</organismsDiffer>
    <experiments>3</experiments>
</comment>
<comment type="interaction">
    <interactant intactId="EBI-11952764">
        <id>Q99081-3</id>
    </interactant>
    <interactant intactId="EBI-740310">
        <id>O60682</id>
        <label>MSC</label>
    </interactant>
    <organismsDiffer>false</organismsDiffer>
    <experiments>3</experiments>
</comment>
<comment type="interaction">
    <interactant intactId="EBI-11952764">
        <id>Q99081-3</id>
    </interactant>
    <interactant intactId="EBI-11991020">
        <id>A6NI15</id>
        <label>MSGN1</label>
    </interactant>
    <organismsDiffer>false</organismsDiffer>
    <experiments>3</experiments>
</comment>
<comment type="interaction">
    <interactant intactId="EBI-11952764">
        <id>Q99081-3</id>
    </interactant>
    <interactant intactId="EBI-7950783">
        <id>Q96JP2</id>
        <label>MYO15B</label>
    </interactant>
    <organismsDiffer>false</organismsDiffer>
    <experiments>3</experiments>
</comment>
<comment type="interaction">
    <interactant intactId="EBI-11952764">
        <id>Q99081-3</id>
    </interactant>
    <interactant intactId="EBI-11750983">
        <id>Q9HC98-4</id>
        <label>NEK6</label>
    </interactant>
    <organismsDiffer>false</organismsDiffer>
    <experiments>3</experiments>
</comment>
<comment type="interaction">
    <interactant intactId="EBI-11952764">
        <id>Q99081-3</id>
    </interactant>
    <interactant intactId="EBI-3908303">
        <id>Q13562</id>
        <label>NEUROD1</label>
    </interactant>
    <organismsDiffer>false</organismsDiffer>
    <experiments>4</experiments>
</comment>
<comment type="interaction">
    <interactant intactId="EBI-11952764">
        <id>Q99081-3</id>
    </interactant>
    <interactant intactId="EBI-10279647">
        <id>Q92886</id>
        <label>NEUROG1</label>
    </interactant>
    <organismsDiffer>false</organismsDiffer>
    <experiments>3</experiments>
</comment>
<comment type="interaction">
    <interactant intactId="EBI-11952764">
        <id>Q99081-3</id>
    </interactant>
    <interactant intactId="EBI-10328570">
        <id>Q9Y4Z2</id>
        <label>NEUROG3</label>
    </interactant>
    <organismsDiffer>false</organismsDiffer>
    <experiments>7</experiments>
</comment>
<comment type="interaction">
    <interactant intactId="EBI-11952764">
        <id>Q99081-3</id>
    </interactant>
    <interactant intactId="EBI-6165879">
        <id>Q96IV0</id>
        <label>NGLY1</label>
    </interactant>
    <organismsDiffer>false</organismsDiffer>
    <experiments>3</experiments>
</comment>
<comment type="interaction">
    <interactant intactId="EBI-11952764">
        <id>Q99081-3</id>
    </interactant>
    <interactant intactId="EBI-5378683">
        <id>Q02577</id>
        <label>NHLH2</label>
    </interactant>
    <organismsDiffer>false</organismsDiffer>
    <experiments>3</experiments>
</comment>
<comment type="interaction">
    <interactant intactId="EBI-11952764">
        <id>Q99081-3</id>
    </interactant>
    <interactant intactId="EBI-714158">
        <id>Q13526</id>
        <label>PIN1</label>
    </interactant>
    <organismsDiffer>false</organismsDiffer>
    <experiments>3</experiments>
</comment>
<comment type="interaction">
    <interactant intactId="EBI-11952764">
        <id>Q99081-3</id>
    </interactant>
    <interactant intactId="EBI-1053424">
        <id>O43741</id>
        <label>PRKAB2</label>
    </interactant>
    <organismsDiffer>false</organismsDiffer>
    <experiments>3</experiments>
</comment>
<comment type="interaction">
    <interactant intactId="EBI-11952764">
        <id>Q99081-3</id>
    </interactant>
    <interactant intactId="EBI-447231">
        <id>Q9Y5S9</id>
        <label>RBM8A</label>
    </interactant>
    <organismsDiffer>false</organismsDiffer>
    <experiments>3</experiments>
</comment>
<comment type="interaction">
    <interactant intactId="EBI-11952764">
        <id>Q99081-3</id>
    </interactant>
    <interactant intactId="EBI-10224192">
        <id>Q06455-4</id>
        <label>RUNX1T1</label>
    </interactant>
    <organismsDiffer>false</organismsDiffer>
    <experiments>2</experiments>
</comment>
<comment type="interaction">
    <interactant intactId="EBI-11952764">
        <id>Q99081-3</id>
    </interactant>
    <interactant intactId="EBI-3923013">
        <id>O14796</id>
        <label>SH2D1B</label>
    </interactant>
    <organismsDiffer>false</organismsDiffer>
    <experiments>3</experiments>
</comment>
<comment type="interaction">
    <interactant intactId="EBI-11952764">
        <id>Q99081-3</id>
    </interactant>
    <interactant intactId="EBI-12018146">
        <id>Q8IYX1</id>
        <label>TBC1D21</label>
    </interactant>
    <organismsDiffer>false</organismsDiffer>
    <experiments>3</experiments>
</comment>
<comment type="interaction">
    <interactant intactId="EBI-11952764">
        <id>Q99081-3</id>
    </interactant>
    <interactant intactId="EBI-723267">
        <id>O43680</id>
        <label>TCF21</label>
    </interactant>
    <organismsDiffer>false</organismsDiffer>
    <experiments>3</experiments>
</comment>
<comment type="interaction">
    <interactant intactId="EBI-11952764">
        <id>Q99081-3</id>
    </interactant>
    <interactant intactId="EBI-12127592">
        <id>Q7RTU1</id>
        <label>TCF23</label>
    </interactant>
    <organismsDiffer>false</organismsDiffer>
    <experiments>3</experiments>
</comment>
<comment type="interaction">
    <interactant intactId="EBI-11952764">
        <id>Q99081-3</id>
    </interactant>
    <interactant intactId="EBI-2341648">
        <id>Q6ZMU5</id>
        <label>TRIM72</label>
    </interactant>
    <organismsDiffer>false</organismsDiffer>
    <experiments>3</experiments>
</comment>
<comment type="interaction">
    <interactant intactId="EBI-11952764">
        <id>Q99081-3</id>
    </interactant>
    <interactant intactId="EBI-21353855">
        <id>Q99598</id>
        <label>TSNAX</label>
    </interactant>
    <organismsDiffer>false</organismsDiffer>
    <experiments>3</experiments>
</comment>
<comment type="interaction">
    <interactant intactId="EBI-11952764">
        <id>Q99081-3</id>
    </interactant>
    <interactant intactId="EBI-11980463">
        <id>Q9UNY4-2</id>
        <label>TTF2</label>
    </interactant>
    <organismsDiffer>false</organismsDiffer>
    <experiments>3</experiments>
</comment>
<comment type="interaction">
    <interactant intactId="EBI-11952764">
        <id>Q99081-3</id>
    </interactant>
    <interactant intactId="EBI-1797313">
        <id>Q8WVJ9</id>
        <label>TWIST2</label>
    </interactant>
    <organismsDiffer>false</organismsDiffer>
    <experiments>3</experiments>
</comment>
<comment type="interaction">
    <interactant intactId="EBI-11952764">
        <id>Q99081-3</id>
    </interactant>
    <interactant intactId="EBI-727424">
        <id>Q9UK41</id>
        <label>VPS28</label>
    </interactant>
    <organismsDiffer>false</organismsDiffer>
    <experiments>3</experiments>
</comment>
<comment type="interaction">
    <interactant intactId="EBI-11952764">
        <id>Q99081-3</id>
    </interactant>
    <interactant intactId="EBI-751647">
        <id>Q15007</id>
        <label>WTAP</label>
    </interactant>
    <organismsDiffer>false</organismsDiffer>
    <experiments>3</experiments>
</comment>
<comment type="interaction">
    <interactant intactId="EBI-11952764">
        <id>Q99081-3</id>
    </interactant>
    <interactant intactId="EBI-16429989">
        <id>A0A0S2Z6P0</id>
        <label>ZNF688</label>
    </interactant>
    <organismsDiffer>false</organismsDiffer>
    <experiments>3</experiments>
</comment>
<comment type="subcellular location">
    <subcellularLocation>
        <location>Nucleus</location>
    </subcellularLocation>
</comment>
<comment type="alternative products">
    <event type="alternative splicing"/>
    <isoform>
        <id>Q99081-1</id>
        <name>1</name>
        <name>a</name>
        <sequence type="displayed"/>
    </isoform>
    <isoform>
        <id>Q99081-2</id>
        <name>2</name>
        <name>b</name>
        <sequence type="described" ref="VSP_039109 VSP_039110"/>
    </isoform>
    <isoform>
        <id>Q99081-3</id>
        <name>3</name>
        <name>c</name>
        <sequence type="described" ref="VSP_040024"/>
    </isoform>
    <isoform>
        <id>Q99081-4</id>
        <name>4</name>
        <sequence type="described" ref="VSP_057419 VSP_057420"/>
    </isoform>
</comment>
<comment type="tissue specificity">
    <text>Expressed in several tissues and cell types including skeletal muscle, thymus, and a B-cell line.</text>
</comment>
<comment type="domain">
    <text evidence="5">The 9aaTAD motif is a transactivation domain present in a large number of yeast and animal transcription factors.</text>
</comment>
<comment type="disease" evidence="7 9">
    <disease id="DI-03808">
        <name>Craniosynostosis 3</name>
        <acronym>CRS3</acronym>
        <description>A primary abnormality of skull growth involving premature fusion of one or more cranial sutures. The growth velocity of the skull often cannot match that of the developing brain resulting in an abnormal head shape and, in some cases, increased intracranial pressure, which must be treated promptly to avoid permanent neurodevelopmental disability.</description>
        <dbReference type="MIM" id="615314"/>
    </disease>
    <text>The disease is caused by variants affecting the gene represented in this entry.</text>
</comment>
<comment type="disease" evidence="11">
    <disease id="DI-06321">
        <name>Hypogonadotropic hypogonadism 26 with or without anosmia</name>
        <acronym>HH26</acronym>
        <description>A form of hypogonadotropic hypogonadism, a group of disorders characterized by absent or incomplete sexual maturation by the age of 18 years, in conjunction with low levels of circulating gonadotropins and testosterone, and no other abnormalities of the hypothalamic-pituitary axis. In some cases, it is associated with non-reproductive phenotypes, such as anosmia, cleft palate, and sensorineural hearing loss. Anosmia or hyposmia is related to the absence or hypoplasia of the olfactory bulbs and tracts. In the presence of anosmia, idiopathic hypogonadotropic hypogonadism is referred to as Kallmann syndrome, whereas in the presence of a normal sense of smell, it has been termed normosmic idiopathic hypogonadotropic hypogonadism (nIHH). HH26 is characterized by micropenis and cryptorchidism at birth in male patients, and absent puberty and anosmia in male or female patients. Some affected individuals also exhibit craniosynostosis. Inheritance can be autosomal dominant or autosomal recessive.</description>
        <dbReference type="MIM" id="619718"/>
    </disease>
    <text>The disease is caused by variants affecting the gene represented in this entry.</text>
</comment>
<comment type="online information" name="Atlas of Genetics and Cytogenetics in Oncology and Haematology">
    <link uri="https://atlasgeneticsoncology.org/gene/406/TCF12"/>
</comment>
<keyword id="KW-0002">3D-structure</keyword>
<keyword id="KW-0025">Alternative splicing</keyword>
<keyword id="KW-0989">Craniosynostosis</keyword>
<keyword id="KW-0217">Developmental protein</keyword>
<keyword id="KW-0221">Differentiation</keyword>
<keyword id="KW-0225">Disease variant</keyword>
<keyword id="KW-0238">DNA-binding</keyword>
<keyword id="KW-1016">Hypogonadotropic hypogonadism</keyword>
<keyword id="KW-1017">Isopeptide bond</keyword>
<keyword id="KW-0956">Kallmann syndrome</keyword>
<keyword id="KW-0524">Neurogenesis</keyword>
<keyword id="KW-0539">Nucleus</keyword>
<keyword id="KW-0597">Phosphoprotein</keyword>
<keyword id="KW-1267">Proteomics identification</keyword>
<keyword id="KW-1185">Reference proteome</keyword>
<keyword id="KW-0804">Transcription</keyword>
<keyword id="KW-0805">Transcription regulation</keyword>
<keyword id="KW-0832">Ubl conjugation</keyword>